<gene>
    <name evidence="33 42" type="primary">CARD8</name>
    <name evidence="39" type="synonym">DACAR</name>
    <name evidence="31" type="synonym">KIAA0955</name>
    <name evidence="34" type="synonym">NDPP1</name>
</gene>
<dbReference type="EC" id="3.4.-.-" evidence="12"/>
<dbReference type="EMBL" id="AB023172">
    <property type="protein sequence ID" value="BAA76799.2"/>
    <property type="status" value="ALT_INIT"/>
    <property type="molecule type" value="mRNA"/>
</dbReference>
<dbReference type="EMBL" id="AF322184">
    <property type="protein sequence ID" value="AAG50014.1"/>
    <property type="molecule type" value="mRNA"/>
</dbReference>
<dbReference type="EMBL" id="AF331519">
    <property type="protein sequence ID" value="AAK01126.1"/>
    <property type="molecule type" value="mRNA"/>
</dbReference>
<dbReference type="EMBL" id="AY026322">
    <property type="protein sequence ID" value="AAK08982.1"/>
    <property type="molecule type" value="mRNA"/>
</dbReference>
<dbReference type="EMBL" id="AF405558">
    <property type="protein sequence ID" value="AAL02427.1"/>
    <property type="molecule type" value="mRNA"/>
</dbReference>
<dbReference type="EMBL" id="EU118120">
    <property type="protein sequence ID" value="ABW96891.1"/>
    <property type="molecule type" value="mRNA"/>
</dbReference>
<dbReference type="EMBL" id="EU118122">
    <property type="protein sequence ID" value="ABW96893.1"/>
    <property type="molecule type" value="mRNA"/>
</dbReference>
<dbReference type="EMBL" id="AF511652">
    <property type="protein sequence ID" value="AAM46959.1"/>
    <property type="molecule type" value="mRNA"/>
</dbReference>
<dbReference type="EMBL" id="AK297045">
    <property type="protein sequence ID" value="BAH12482.1"/>
    <property type="molecule type" value="mRNA"/>
</dbReference>
<dbReference type="EMBL" id="AK297069">
    <property type="protein sequence ID" value="BAH12488.1"/>
    <property type="molecule type" value="mRNA"/>
</dbReference>
<dbReference type="EMBL" id="AC008392">
    <property type="status" value="NOT_ANNOTATED_CDS"/>
    <property type="molecule type" value="Genomic_DNA"/>
</dbReference>
<dbReference type="EMBL" id="AC011466">
    <property type="status" value="NOT_ANNOTATED_CDS"/>
    <property type="molecule type" value="Genomic_DNA"/>
</dbReference>
<dbReference type="EMBL" id="CH471177">
    <property type="protein sequence ID" value="EAW52321.1"/>
    <property type="molecule type" value="Genomic_DNA"/>
</dbReference>
<dbReference type="EMBL" id="CH471177">
    <property type="protein sequence ID" value="EAW52323.1"/>
    <property type="molecule type" value="Genomic_DNA"/>
</dbReference>
<dbReference type="EMBL" id="BC056891">
    <property type="protein sequence ID" value="AAH56891.1"/>
    <property type="molecule type" value="mRNA"/>
</dbReference>
<dbReference type="CCDS" id="CCDS12712.2">
    <molecule id="Q9Y2G2-4"/>
</dbReference>
<dbReference type="CCDS" id="CCDS54287.1">
    <molecule id="Q9Y2G2-6"/>
</dbReference>
<dbReference type="CCDS" id="CCDS54288.1">
    <molecule id="Q9Y2G2-3"/>
</dbReference>
<dbReference type="CCDS" id="CCDS54289.1">
    <molecule id="Q9Y2G2-5"/>
</dbReference>
<dbReference type="RefSeq" id="NP_001171829.1">
    <molecule id="Q9Y2G2-5"/>
    <property type="nucleotide sequence ID" value="NM_001184900.3"/>
</dbReference>
<dbReference type="RefSeq" id="NP_001171830.1">
    <molecule id="Q9Y2G2-4"/>
    <property type="nucleotide sequence ID" value="NM_001184901.1"/>
</dbReference>
<dbReference type="RefSeq" id="NP_001171831.1">
    <molecule id="Q9Y2G2-3"/>
    <property type="nucleotide sequence ID" value="NM_001184902.2"/>
</dbReference>
<dbReference type="RefSeq" id="NP_001171832.1">
    <molecule id="Q9Y2G2-3"/>
    <property type="nucleotide sequence ID" value="NM_001184903.1"/>
</dbReference>
<dbReference type="RefSeq" id="NP_001171833.1">
    <molecule id="Q9Y2G2-6"/>
    <property type="nucleotide sequence ID" value="NM_001184904.2"/>
</dbReference>
<dbReference type="RefSeq" id="NP_001338711.1">
    <molecule id="Q9Y2G2-5"/>
    <property type="nucleotide sequence ID" value="NM_001351782.2"/>
</dbReference>
<dbReference type="RefSeq" id="NP_001338712.1">
    <molecule id="Q9Y2G2-4"/>
    <property type="nucleotide sequence ID" value="NM_001351783.2"/>
</dbReference>
<dbReference type="RefSeq" id="NP_001352879.1">
    <molecule id="Q9Y2G2-1"/>
    <property type="nucleotide sequence ID" value="NM_001365950.1"/>
</dbReference>
<dbReference type="RefSeq" id="NP_055774.2">
    <molecule id="Q9Y2G2-4"/>
    <property type="nucleotide sequence ID" value="NM_014959.5"/>
</dbReference>
<dbReference type="RefSeq" id="XP_006723154.1">
    <property type="nucleotide sequence ID" value="XM_006723091.3"/>
</dbReference>
<dbReference type="RefSeq" id="XP_006723155.1">
    <property type="nucleotide sequence ID" value="XM_006723092.3"/>
</dbReference>
<dbReference type="RefSeq" id="XP_006723156.1">
    <property type="nucleotide sequence ID" value="XM_006723093.3"/>
</dbReference>
<dbReference type="RefSeq" id="XP_006723158.1">
    <property type="nucleotide sequence ID" value="XM_006723095.3"/>
</dbReference>
<dbReference type="RefSeq" id="XP_006723159.1">
    <property type="nucleotide sequence ID" value="XM_006723096.3"/>
</dbReference>
<dbReference type="RefSeq" id="XP_006723160.1">
    <property type="nucleotide sequence ID" value="XM_006723097.3"/>
</dbReference>
<dbReference type="RefSeq" id="XP_006723167.1">
    <property type="nucleotide sequence ID" value="XM_006723104.3"/>
</dbReference>
<dbReference type="RefSeq" id="XP_006723169.1">
    <property type="nucleotide sequence ID" value="XM_006723106.3"/>
</dbReference>
<dbReference type="RefSeq" id="XP_006723172.1">
    <property type="nucleotide sequence ID" value="XM_006723109.3"/>
</dbReference>
<dbReference type="RefSeq" id="XP_006723173.1">
    <property type="nucleotide sequence ID" value="XM_006723110.3"/>
</dbReference>
<dbReference type="RefSeq" id="XP_011524943.1">
    <property type="nucleotide sequence ID" value="XM_011526641.2"/>
</dbReference>
<dbReference type="RefSeq" id="XP_011524944.1">
    <property type="nucleotide sequence ID" value="XM_011526642.2"/>
</dbReference>
<dbReference type="RefSeq" id="XP_011524945.1">
    <property type="nucleotide sequence ID" value="XM_011526643.2"/>
</dbReference>
<dbReference type="RefSeq" id="XP_011524946.1">
    <property type="nucleotide sequence ID" value="XM_011526644.2"/>
</dbReference>
<dbReference type="RefSeq" id="XP_011524952.1">
    <property type="nucleotide sequence ID" value="XM_011526650.2"/>
</dbReference>
<dbReference type="RefSeq" id="XP_016881972.1">
    <property type="nucleotide sequence ID" value="XM_017026483.1"/>
</dbReference>
<dbReference type="RefSeq" id="XP_016881979.1">
    <property type="nucleotide sequence ID" value="XM_017026490.1"/>
</dbReference>
<dbReference type="RefSeq" id="XP_016881987.1">
    <property type="nucleotide sequence ID" value="XM_017026498.1"/>
</dbReference>
<dbReference type="PDB" id="4IKM">
    <property type="method" value="X-ray"/>
    <property type="resolution" value="2.46 A"/>
    <property type="chains" value="A=451-537"/>
</dbReference>
<dbReference type="PDB" id="6K9F">
    <property type="method" value="EM"/>
    <property type="resolution" value="3.70 A"/>
    <property type="chains" value="A/B/C/D/E/F/G/H/I/J/K/L=451-537"/>
</dbReference>
<dbReference type="PDB" id="6XKJ">
    <property type="method" value="EM"/>
    <property type="resolution" value="3.54 A"/>
    <property type="chains" value="A/B/C/D/E/F/G/H/I/J/K/L/M/N/O/P=451-537"/>
</dbReference>
<dbReference type="PDB" id="7JKQ">
    <property type="method" value="EM"/>
    <property type="resolution" value="3.30 A"/>
    <property type="chains" value="B/C=1-537"/>
</dbReference>
<dbReference type="PDB" id="7JN7">
    <property type="method" value="EM"/>
    <property type="resolution" value="3.30 A"/>
    <property type="chains" value="B/C=1-537"/>
</dbReference>
<dbReference type="PDBsum" id="4IKM"/>
<dbReference type="PDBsum" id="6K9F"/>
<dbReference type="PDBsum" id="6XKJ"/>
<dbReference type="PDBsum" id="7JKQ"/>
<dbReference type="PDBsum" id="7JN7"/>
<dbReference type="EMDB" id="EMD-22219"/>
<dbReference type="EMDB" id="EMD-22367"/>
<dbReference type="EMDB" id="EMD-22402"/>
<dbReference type="EMDB" id="EMD-9948"/>
<dbReference type="SMR" id="Q9Y2G2"/>
<dbReference type="BioGRID" id="116564">
    <property type="interactions" value="53"/>
</dbReference>
<dbReference type="CORUM" id="Q9Y2G2"/>
<dbReference type="FunCoup" id="Q9Y2G2">
    <property type="interactions" value="968"/>
</dbReference>
<dbReference type="IntAct" id="Q9Y2G2">
    <property type="interactions" value="42"/>
</dbReference>
<dbReference type="MINT" id="Q9Y2G2"/>
<dbReference type="STRING" id="9606.ENSP00000499211"/>
<dbReference type="MEROPS" id="S79.001"/>
<dbReference type="iPTMnet" id="Q9Y2G2"/>
<dbReference type="PhosphoSitePlus" id="Q9Y2G2"/>
<dbReference type="BioMuta" id="CARD8"/>
<dbReference type="DMDM" id="14424229"/>
<dbReference type="jPOST" id="Q9Y2G2"/>
<dbReference type="MassIVE" id="Q9Y2G2"/>
<dbReference type="PaxDb" id="9606-ENSP00000375767"/>
<dbReference type="PeptideAtlas" id="Q9Y2G2"/>
<dbReference type="ProteomicsDB" id="15473"/>
<dbReference type="ProteomicsDB" id="19923"/>
<dbReference type="ProteomicsDB" id="33792"/>
<dbReference type="ProteomicsDB" id="85761">
    <molecule id="Q9Y2G2-1"/>
</dbReference>
<dbReference type="ProteomicsDB" id="85762">
    <molecule id="Q9Y2G2-2"/>
</dbReference>
<dbReference type="ProteomicsDB" id="85763">
    <molecule id="Q9Y2G2-3"/>
</dbReference>
<dbReference type="Antibodypedia" id="18287">
    <property type="antibodies" value="307 antibodies from 34 providers"/>
</dbReference>
<dbReference type="DNASU" id="22900"/>
<dbReference type="Ensembl" id="ENST00000391898.7">
    <molecule id="Q9Y2G2-5"/>
    <property type="protein sequence ID" value="ENSP00000375767.3"/>
    <property type="gene ID" value="ENSG00000105483.18"/>
</dbReference>
<dbReference type="Ensembl" id="ENST00000447740.6">
    <molecule id="Q9Y2G2-4"/>
    <property type="protein sequence ID" value="ENSP00000391248.2"/>
    <property type="gene ID" value="ENSG00000105483.18"/>
</dbReference>
<dbReference type="Ensembl" id="ENST00000519332.5">
    <molecule id="Q9Y2G2-6"/>
    <property type="protein sequence ID" value="ENSP00000430108.1"/>
    <property type="gene ID" value="ENSG00000105483.18"/>
</dbReference>
<dbReference type="Ensembl" id="ENST00000519940.6">
    <molecule id="Q9Y2G2-5"/>
    <property type="protein sequence ID" value="ENSP00000428883.1"/>
    <property type="gene ID" value="ENSG00000105483.18"/>
</dbReference>
<dbReference type="Ensembl" id="ENST00000520007.5">
    <molecule id="Q9Y2G2-6"/>
    <property type="protein sequence ID" value="ENSP00000427727.1"/>
    <property type="gene ID" value="ENSG00000105483.18"/>
</dbReference>
<dbReference type="Ensembl" id="ENST00000520015.5">
    <molecule id="Q9Y2G2-3"/>
    <property type="protein sequence ID" value="ENSP00000430747.1"/>
    <property type="gene ID" value="ENSG00000105483.18"/>
</dbReference>
<dbReference type="Ensembl" id="ENST00000520153.5">
    <molecule id="Q9Y2G2-4"/>
    <property type="protein sequence ID" value="ENSP00000428736.1"/>
    <property type="gene ID" value="ENSG00000105483.18"/>
</dbReference>
<dbReference type="Ensembl" id="ENST00000520753.5">
    <molecule id="Q9Y2G2-3"/>
    <property type="protein sequence ID" value="ENSP00000429839.1"/>
    <property type="gene ID" value="ENSG00000105483.18"/>
</dbReference>
<dbReference type="Ensembl" id="ENST00000521613.5">
    <molecule id="Q9Y2G2-4"/>
    <property type="protein sequence ID" value="ENSP00000427858.1"/>
    <property type="gene ID" value="ENSG00000105483.18"/>
</dbReference>
<dbReference type="Ensembl" id="ENST00000522431.5">
    <molecule id="Q9Y2G2-6"/>
    <property type="protein sequence ID" value="ENSP00000427922.1"/>
    <property type="gene ID" value="ENSG00000105483.18"/>
</dbReference>
<dbReference type="Ensembl" id="ENST00000651546.1">
    <molecule id="Q9Y2G2-5"/>
    <property type="protein sequence ID" value="ENSP00000499211.1"/>
    <property type="gene ID" value="ENSG00000105483.18"/>
</dbReference>
<dbReference type="GeneID" id="22900"/>
<dbReference type="KEGG" id="hsa:22900"/>
<dbReference type="MANE-Select" id="ENST00000651546.1">
    <property type="protein sequence ID" value="ENSP00000499211.1"/>
    <property type="RefSeq nucleotide sequence ID" value="NM_001184900.3"/>
    <property type="RefSeq protein sequence ID" value="NP_001171829.1"/>
</dbReference>
<dbReference type="UCSC" id="uc002pih.5">
    <molecule id="Q9Y2G2-5"/>
    <property type="organism name" value="human"/>
</dbReference>
<dbReference type="UCSC" id="uc002pij.3">
    <property type="organism name" value="human"/>
</dbReference>
<dbReference type="AGR" id="HGNC:17057"/>
<dbReference type="CTD" id="22900"/>
<dbReference type="DisGeNET" id="22900"/>
<dbReference type="GeneCards" id="CARD8"/>
<dbReference type="HGNC" id="HGNC:17057">
    <property type="gene designation" value="CARD8"/>
</dbReference>
<dbReference type="HPA" id="ENSG00000105483">
    <property type="expression patterns" value="Low tissue specificity"/>
</dbReference>
<dbReference type="MalaCards" id="CARD8"/>
<dbReference type="MIM" id="609051">
    <property type="type" value="gene"/>
</dbReference>
<dbReference type="MIM" id="619079">
    <property type="type" value="phenotype"/>
</dbReference>
<dbReference type="neXtProt" id="NX_Q9Y2G2"/>
<dbReference type="OpenTargets" id="ENSG00000105483"/>
<dbReference type="PharmGKB" id="PA134916154"/>
<dbReference type="VEuPathDB" id="HostDB:ENSG00000105483"/>
<dbReference type="eggNOG" id="KOG3573">
    <property type="taxonomic scope" value="Eukaryota"/>
</dbReference>
<dbReference type="GeneTree" id="ENSGT00830000128447"/>
<dbReference type="HOGENOM" id="CLU_037186_1_0_1"/>
<dbReference type="InParanoid" id="Q9Y2G2"/>
<dbReference type="OMA" id="DKSANRY"/>
<dbReference type="OrthoDB" id="428577at2759"/>
<dbReference type="PAN-GO" id="Q9Y2G2">
    <property type="GO annotations" value="4 GO annotations based on evolutionary models"/>
</dbReference>
<dbReference type="PhylomeDB" id="Q9Y2G2"/>
<dbReference type="TreeFam" id="TF352798"/>
<dbReference type="PathwayCommons" id="Q9Y2G2"/>
<dbReference type="Reactome" id="R-HSA-111458">
    <property type="pathway name" value="Formation of apoptosome"/>
</dbReference>
<dbReference type="Reactome" id="R-HSA-9627069">
    <property type="pathway name" value="Regulation of the apoptosome activity"/>
</dbReference>
<dbReference type="SignaLink" id="Q9Y2G2"/>
<dbReference type="SIGNOR" id="Q9Y2G2"/>
<dbReference type="BioGRID-ORCS" id="22900">
    <property type="hits" value="16 hits in 1158 CRISPR screens"/>
</dbReference>
<dbReference type="ChiTaRS" id="CARD8">
    <property type="organism name" value="human"/>
</dbReference>
<dbReference type="EvolutionaryTrace" id="Q9Y2G2"/>
<dbReference type="GeneWiki" id="CARD8"/>
<dbReference type="GenomeRNAi" id="22900"/>
<dbReference type="Pharos" id="Q9Y2G2">
    <property type="development level" value="Tbio"/>
</dbReference>
<dbReference type="PRO" id="PR:Q9Y2G2"/>
<dbReference type="Proteomes" id="UP000005640">
    <property type="component" value="Chromosome 19"/>
</dbReference>
<dbReference type="RNAct" id="Q9Y2G2">
    <property type="molecule type" value="protein"/>
</dbReference>
<dbReference type="Bgee" id="ENSG00000105483">
    <property type="expression patterns" value="Expressed in monocyte and 173 other cell types or tissues"/>
</dbReference>
<dbReference type="ExpressionAtlas" id="Q9Y2G2">
    <property type="expression patterns" value="baseline and differential"/>
</dbReference>
<dbReference type="GO" id="GO:0140634">
    <property type="term" value="C:CARD8 inflammasome complex"/>
    <property type="evidence" value="ECO:0000314"/>
    <property type="project" value="UniProtKB"/>
</dbReference>
<dbReference type="GO" id="GO:0005737">
    <property type="term" value="C:cytoplasm"/>
    <property type="evidence" value="ECO:0000314"/>
    <property type="project" value="UniProtKB"/>
</dbReference>
<dbReference type="GO" id="GO:0005829">
    <property type="term" value="C:cytosol"/>
    <property type="evidence" value="ECO:0000304"/>
    <property type="project" value="Reactome"/>
</dbReference>
<dbReference type="GO" id="GO:0072559">
    <property type="term" value="C:NLRP3 inflammasome complex"/>
    <property type="evidence" value="ECO:0000314"/>
    <property type="project" value="UniProtKB"/>
</dbReference>
<dbReference type="GO" id="GO:0005654">
    <property type="term" value="C:nucleoplasm"/>
    <property type="evidence" value="ECO:0000314"/>
    <property type="project" value="HPA"/>
</dbReference>
<dbReference type="GO" id="GO:0005634">
    <property type="term" value="C:nucleus"/>
    <property type="evidence" value="ECO:0000314"/>
    <property type="project" value="HGNC-UCL"/>
</dbReference>
<dbReference type="GO" id="GO:0032991">
    <property type="term" value="C:protein-containing complex"/>
    <property type="evidence" value="ECO:0000314"/>
    <property type="project" value="UniProtKB"/>
</dbReference>
<dbReference type="GO" id="GO:0050700">
    <property type="term" value="F:CARD domain binding"/>
    <property type="evidence" value="ECO:0000353"/>
    <property type="project" value="UniProtKB"/>
</dbReference>
<dbReference type="GO" id="GO:0140608">
    <property type="term" value="F:cysteine-type endopeptidase activator activity"/>
    <property type="evidence" value="ECO:0000314"/>
    <property type="project" value="UniProtKB"/>
</dbReference>
<dbReference type="GO" id="GO:0140693">
    <property type="term" value="F:molecular condensate scaffold activity"/>
    <property type="evidence" value="ECO:0000314"/>
    <property type="project" value="UniProt"/>
</dbReference>
<dbReference type="GO" id="GO:0032089">
    <property type="term" value="F:NACHT domain binding"/>
    <property type="evidence" value="ECO:0000353"/>
    <property type="project" value="HGNC-UCL"/>
</dbReference>
<dbReference type="GO" id="GO:0038187">
    <property type="term" value="F:pattern recognition receptor activity"/>
    <property type="evidence" value="ECO:0000314"/>
    <property type="project" value="UniProtKB"/>
</dbReference>
<dbReference type="GO" id="GO:0008233">
    <property type="term" value="F:peptidase activity"/>
    <property type="evidence" value="ECO:0007669"/>
    <property type="project" value="UniProtKB-KW"/>
</dbReference>
<dbReference type="GO" id="GO:0042803">
    <property type="term" value="F:protein homodimerization activity"/>
    <property type="evidence" value="ECO:0000314"/>
    <property type="project" value="HGNC-UCL"/>
</dbReference>
<dbReference type="GO" id="GO:0002218">
    <property type="term" value="P:activation of innate immune response"/>
    <property type="evidence" value="ECO:0000318"/>
    <property type="project" value="GO_Central"/>
</dbReference>
<dbReference type="GO" id="GO:0140374">
    <property type="term" value="P:antiviral innate immune response"/>
    <property type="evidence" value="ECO:0000314"/>
    <property type="project" value="UniProtKB"/>
</dbReference>
<dbReference type="GO" id="GO:0140633">
    <property type="term" value="P:CARD8 inflammasome complex assembly"/>
    <property type="evidence" value="ECO:0000314"/>
    <property type="project" value="UniProt"/>
</dbReference>
<dbReference type="GO" id="GO:0051607">
    <property type="term" value="P:defense response to virus"/>
    <property type="evidence" value="ECO:0000314"/>
    <property type="project" value="UniProtKB"/>
</dbReference>
<dbReference type="GO" id="GO:0006954">
    <property type="term" value="P:inflammatory response"/>
    <property type="evidence" value="ECO:0000318"/>
    <property type="project" value="GO_Central"/>
</dbReference>
<dbReference type="GO" id="GO:0097193">
    <property type="term" value="P:intrinsic apoptotic signaling pathway"/>
    <property type="evidence" value="ECO:0000318"/>
    <property type="project" value="GO_Central"/>
</dbReference>
<dbReference type="GO" id="GO:0043124">
    <property type="term" value="P:negative regulation of canonical NF-kappaB signal transduction"/>
    <property type="evidence" value="ECO:0000314"/>
    <property type="project" value="HGNC-UCL"/>
</dbReference>
<dbReference type="GO" id="GO:0032691">
    <property type="term" value="P:negative regulation of interleukin-1 beta production"/>
    <property type="evidence" value="ECO:0000314"/>
    <property type="project" value="UniProtKB"/>
</dbReference>
<dbReference type="GO" id="GO:0031665">
    <property type="term" value="P:negative regulation of lipopolysaccharide-mediated signaling pathway"/>
    <property type="evidence" value="ECO:0000314"/>
    <property type="project" value="UniProtKB"/>
</dbReference>
<dbReference type="GO" id="GO:1900226">
    <property type="term" value="P:negative regulation of NLRP3 inflammasome complex assembly"/>
    <property type="evidence" value="ECO:0000314"/>
    <property type="project" value="UniProtKB"/>
</dbReference>
<dbReference type="GO" id="GO:0010804">
    <property type="term" value="P:negative regulation of tumor necrosis factor-mediated signaling pathway"/>
    <property type="evidence" value="ECO:0000315"/>
    <property type="project" value="UniProtKB"/>
</dbReference>
<dbReference type="GO" id="GO:0032731">
    <property type="term" value="P:positive regulation of interleukin-1 beta production"/>
    <property type="evidence" value="ECO:0000314"/>
    <property type="project" value="HGNC-UCL"/>
</dbReference>
<dbReference type="GO" id="GO:0042981">
    <property type="term" value="P:regulation of apoptotic process"/>
    <property type="evidence" value="ECO:0007669"/>
    <property type="project" value="InterPro"/>
</dbReference>
<dbReference type="GO" id="GO:0097264">
    <property type="term" value="P:self proteolysis"/>
    <property type="evidence" value="ECO:0000314"/>
    <property type="project" value="UniProtKB"/>
</dbReference>
<dbReference type="CDD" id="cd01671">
    <property type="entry name" value="CARD"/>
    <property type="match status" value="1"/>
</dbReference>
<dbReference type="FunFam" id="1.10.533.10:FF:000090">
    <property type="entry name" value="Caspase recruitment domain family member 8"/>
    <property type="match status" value="1"/>
</dbReference>
<dbReference type="Gene3D" id="1.10.533.10">
    <property type="entry name" value="Death Domain, Fas"/>
    <property type="match status" value="1"/>
</dbReference>
<dbReference type="InterPro" id="IPR001315">
    <property type="entry name" value="CARD"/>
</dbReference>
<dbReference type="InterPro" id="IPR011029">
    <property type="entry name" value="DEATH-like_dom_sf"/>
</dbReference>
<dbReference type="InterPro" id="IPR025307">
    <property type="entry name" value="FIIND_dom"/>
</dbReference>
<dbReference type="InterPro" id="IPR051249">
    <property type="entry name" value="NLRP_Inflammasome"/>
</dbReference>
<dbReference type="PANTHER" id="PTHR46985:SF4">
    <property type="entry name" value="CASPASE RECRUITMENT DOMAIN-CONTAINING PROTEIN 8"/>
    <property type="match status" value="1"/>
</dbReference>
<dbReference type="PANTHER" id="PTHR46985">
    <property type="entry name" value="NACHT, LRR AND PYD DOMAINS-CONTAINING PROTEIN 1"/>
    <property type="match status" value="1"/>
</dbReference>
<dbReference type="Pfam" id="PF00619">
    <property type="entry name" value="CARD"/>
    <property type="match status" value="1"/>
</dbReference>
<dbReference type="Pfam" id="PF13553">
    <property type="entry name" value="FIIND"/>
    <property type="match status" value="1"/>
</dbReference>
<dbReference type="Pfam" id="PF23679">
    <property type="entry name" value="UPA-FIIND"/>
    <property type="match status" value="1"/>
</dbReference>
<dbReference type="SUPFAM" id="SSF47986">
    <property type="entry name" value="DEATH domain"/>
    <property type="match status" value="1"/>
</dbReference>
<dbReference type="PROSITE" id="PS50209">
    <property type="entry name" value="CARD"/>
    <property type="match status" value="1"/>
</dbReference>
<dbReference type="PROSITE" id="PS51830">
    <property type="entry name" value="FIIND"/>
    <property type="match status" value="1"/>
</dbReference>
<organism>
    <name type="scientific">Homo sapiens</name>
    <name type="common">Human</name>
    <dbReference type="NCBI Taxonomy" id="9606"/>
    <lineage>
        <taxon>Eukaryota</taxon>
        <taxon>Metazoa</taxon>
        <taxon>Chordata</taxon>
        <taxon>Craniata</taxon>
        <taxon>Vertebrata</taxon>
        <taxon>Euteleostomi</taxon>
        <taxon>Mammalia</taxon>
        <taxon>Eutheria</taxon>
        <taxon>Euarchontoglires</taxon>
        <taxon>Primates</taxon>
        <taxon>Haplorrhini</taxon>
        <taxon>Catarrhini</taxon>
        <taxon>Hominidae</taxon>
        <taxon>Homo</taxon>
    </lineage>
</organism>
<keyword id="KW-0002">3D-structure</keyword>
<keyword id="KW-0025">Alternative splicing</keyword>
<keyword id="KW-0963">Cytoplasm</keyword>
<keyword id="KW-0903">Direct protein sequencing</keyword>
<keyword id="KW-0225">Disease variant</keyword>
<keyword id="KW-0945">Host-virus interaction</keyword>
<keyword id="KW-0378">Hydrolase</keyword>
<keyword id="KW-0391">Immunity</keyword>
<keyword id="KW-1271">Inflammasome</keyword>
<keyword id="KW-0395">Inflammatory response</keyword>
<keyword id="KW-0399">Innate immunity</keyword>
<keyword id="KW-1210">Necrosis</keyword>
<keyword id="KW-0539">Nucleus</keyword>
<keyword id="KW-0645">Protease</keyword>
<keyword id="KW-1267">Proteomics identification</keyword>
<keyword id="KW-1185">Reference proteome</keyword>
<keyword id="KW-0832">Ubl conjugation</keyword>
<comment type="function">
    <text evidence="4 5 6 7 9 14 19 21 22 26 28 30">Inflammasome sensor, which mediates inflammasome activation in response to various pathogen-associated signals, leading to subsequent pyroptosis of CD4(+) T-cells and macrophages (PubMed:11408476, PubMed:11821383, PubMed:15030775, PubMed:32051255, PubMed:32840892, PubMed:33542150, PubMed:34019797, PubMed:36357533). Inflammasomes are supramolecular complexes that assemble in the cytosol in response to pathogens and other damage-associated signals and play critical roles in innate immunity and inflammation (PubMed:11408476, PubMed:11821383, PubMed:15030775, PubMed:36357533). Acts as a recognition receptor (PRR): recognizes specific pathogens and other damage-associated signals, such as HIV-1 protease activity or Val-boroPro inhibitor, and mediates CARD8 inflammasome activation (PubMed:32840892, PubMed:33542150, PubMed:36357533). In response to pathogen-associated signals, the N-terminal part of CARD8 is degraded by the proteasome, releasing the cleaved C-terminal part of the protein (Caspase recruitment domain-containing protein 8, C-terminus), which polymerizes to initiate the formation of the inflammasome complex: the CARD8 inflammasome directly recruits pro-caspase-1 (proCASP1) independently of PYCARD/ASC and promotes caspase-1 (CASP1) activation, which subsequently cleaves and activates inflammatory cytokines IL1B and IL18 and gasdermin-D (GSDMD), leading to pyroptosis (PubMed:32051255, PubMed:32840892, PubMed:33053349, PubMed:33542150, PubMed:36357533). Ability to sense HIV-1 protease activity leads to the clearance of latent HIV-1 in patient CD4(+) T-cells after viral reactivation; in contrast, HIV-1 can evade CARD8-sensing when its protease remains inactive in infected cells prior to viral budding (PubMed:33542150). Also acts as a negative regulator of the NLRP3 inflammasome (PubMed:24517500). May also act as an inhibitor of NF-kappa-B activation (PubMed:11551959, PubMed:12067710).</text>
</comment>
<comment type="function">
    <molecule>Caspase recruitment domain-containing protein 8</molecule>
    <text evidence="12">Constitutes the precursor of the CARD8 inflammasome, which mediates autoproteolytic processing within the FIIND domain to generate the N-terminal and C-terminal parts, which are associated non-covalently in absence of pathogens and other damage-associated signals.</text>
</comment>
<comment type="function">
    <molecule>Caspase recruitment domain-containing protein 8, N-terminus</molecule>
    <text evidence="26 37 41">Regulatory part that prevents formation of the CARD8 inflammasome: in absence of pathogens and other damage-associated signals, interacts with the C-terminal part of CARD8 (Caspase recruitment domain-containing protein 8, C-terminus), preventing activation of the CARD8 inflammasome (PubMed:33542150). In response to pathogen-associated signals, this part is ubiquitinated by the N-end rule pathway and degraded by the proteasome, releasing the cleaved C-terminal part of the protein, which polymerizes and forms the CARD8 inflammasome (Probable) (PubMed:32558991).</text>
</comment>
<comment type="function">
    <molecule>Caspase recruitment domain-containing protein 8, C-terminus</molecule>
    <text evidence="21 26 28">Constitutes the active part of the CARD8 inflammasome (PubMed:32840892, PubMed:34019797). In absence of pathogens and other damage-associated signals, interacts with the N-terminal part of CARD8 (Caspase recruitment domain-containing protein 8, N-terminus), preventing activation of the CARD8 inflammasome (PubMed:33542150). In response to pathogen-associated signals, the N-terminal part of CARD8 is degraded by the proteasome, releasing this form, which polymerizes to form the CARD8 inflammasome complex: the CARD8 inflammasome complex then directly recruits pro-caspase-1 (proCASP1) and promotes caspase-1 (CASP1) activation, leading to gasdermin-D (GSDMD) cleavage and subsequent pyroptosis (PubMed:32840892, PubMed:33542150).</text>
</comment>
<comment type="activity regulation">
    <text evidence="17 18 20 21 22 26 28 29 30">CARD8 inflammasome is activated by HIV-1 protease activity: HIV-1 protease cleaves CARD8, promoting ubiquitination and degradation of the N-terminal part, releasing the cleaved C-terminal part of the protein (Caspase recruitment domain-containing protein 8, C-terminus), which polymerizes and forms the CARD8 inflammasome (PubMed:33542150). CARD8 inflammasome is inhibited by DPP8 and DPP9, which sequester the C-terminal fragment of CARD8 (Caspase recruitment domain-containing protein 8, C-terminus) in a ternary complex, thereby preventing CARD8 oligomerization and activation (PubMed:29967349, PubMed:31525884, PubMed:32796818, PubMed:34019797). CARD8 inflammasome is activated by Val-boroPro (Talabostat, PT-100), an inhibitor of dipeptidyl peptidases DPP8 and DPP9 (PubMed:29967349, PubMed:31525884, PubMed:32796818, PubMed:32840892, PubMed:33053349, PubMed:34019797, PubMed:36357533). Val-boroPro relieves inhibition of DPP8 and/or DPP9 by inducing the proteasome-mediated destruction of the N-terminal part of CARD8, releasing its C-terminal part from autoinhibition (PubMed:29967349, PubMed:31525884, PubMed:32796818, PubMed:34019797, PubMed:36357533). Indirectly activated by the pseudodipeptide CQ31 (PubMed:35165443). CQ31 directly inactivates the peptidases PEPD and XPNPEP1, leading to an accumulation of dipeptides that weaky inhibit DDP8 and DPP9, relieving DPP8- and/or DPP9-mediated inhibition of CARD8 (PubMed:35165443).</text>
</comment>
<comment type="subunit">
    <text evidence="5 6 7 9 14 18 27 28">Interacts with DPP9; leading to inhibit activation of the inflammasome (PubMed:31525884, PubMed:33731929, PubMed:34019797). DPP9 acts via formation of a ternary complex, composed of a DPP9 homodimer, one full-length CARD8 protein, and one cleaved C-terminus of CARD8 (Caspase recruitment domain-containing protein 8, C-terminus) (PubMed:34019797). Interacts with DPP8; leading to inhibit activation of the inflammasome, probably via formation of a ternary complex with DPP8 (PubMed:31525884). Interacts with NLRP3 (PubMed:24517500). Interacts with IKBKG/NEMO (PubMed:11551959). Interacts with DRAL (PubMed:12067710). Binds to caspase-1 (CASP1), CARD16/pseudo-ICE and CARD18/ICEBERG (PubMed:11821383). Interacts with NLRP2 (via NACHT domain) (PubMed:15030775).</text>
</comment>
<comment type="subunit">
    <molecule>Caspase recruitment domain-containing protein 8, N-terminus</molecule>
    <text evidence="26">Interacts with the C-terminal part of CARD8 (Caspase recruitment domain-containing protein 8, C-terminus) in absence of pathogens and other damage-associated signals.</text>
</comment>
<comment type="subunit">
    <molecule>Caspase recruitment domain-containing protein 8, C-terminus</molecule>
    <text evidence="19 24 25 26">Interacts with the N-terminal part of CARD8 (Caspase recruitment domain-containing protein 8, N-terminus) in absence of pathogens and other damage-associated signals (PubMed:33542150). Homomultimer; forms the CARD8 inflammasome polymeric complex, a filament composed of homopolymers of this form in response to pathogens and other damage-associated signals (PubMed:33420028, PubMed:33420033). The CARD8 inflammasome polymeric complex directly recruits pro-caspase-1 (proCASP1) independently of PYCARD/ASC (PubMed:32051255). Interacts (via CARD domain) with CASP1 (via CARD domain); leading to CASP1 activation (PubMed:33420033, PubMed:33542150).</text>
</comment>
<comment type="subcellular location">
    <subcellularLocation>
        <location evidence="9 14 23">Cytoplasm</location>
    </subcellularLocation>
    <subcellularLocation>
        <location evidence="9 23">Nucleus</location>
    </subcellularLocation>
</comment>
<comment type="subcellular location">
    <molecule>Caspase recruitment domain-containing protein 8, C-terminus</molecule>
    <subcellularLocation>
        <location evidence="21 24 25 26">Inflammasome</location>
    </subcellularLocation>
</comment>
<comment type="alternative products">
    <event type="alternative splicing"/>
    <isoform>
        <id>Q9Y2G2-5</id>
        <name>5</name>
        <name evidence="35">T60</name>
        <name>a</name>
        <sequence type="displayed"/>
    </isoform>
    <isoform>
        <id>Q9Y2G2-1</id>
        <name>1</name>
        <name>Long</name>
        <name evidence="35">T48</name>
        <sequence type="described" ref="VSP_061068 VSP_061072"/>
    </isoform>
    <isoform>
        <id>Q9Y2G2-2</id>
        <name>2</name>
        <name>Short</name>
        <sequence type="described" ref="VSP_061068 VSP_061072 VSP_061073 VSP_061074"/>
    </isoform>
    <isoform>
        <id>Q9Y2G2-3</id>
        <name>3</name>
        <name>c</name>
        <sequence type="described" ref="VSP_061073 VSP_061074"/>
    </isoform>
    <isoform>
        <id>Q9Y2G2-4</id>
        <name>4</name>
        <name evidence="35">T54</name>
        <name>b</name>
        <sequence type="described" ref="VSP_061070"/>
    </isoform>
    <isoform>
        <id>Q9Y2G2-6</id>
        <name>6</name>
        <name>d</name>
        <sequence type="described" ref="VSP_061071"/>
    </isoform>
    <isoform>
        <id>Q9Y2G2-7</id>
        <name>7</name>
        <name evidence="35">T47</name>
        <sequence type="described" ref="VSP_061069"/>
    </isoform>
</comment>
<comment type="tissue specificity">
    <text evidence="5 6">High expression in lung, ovary, testis and placenta (PubMed:11551959). Lower expression in heart, kidney and liver (PubMed:11551959). Also expressed in spleen, lymph node and bone marrow (PubMed:11821383).</text>
</comment>
<comment type="domain">
    <text evidence="22">The disordered region is required for activation of the CARD8 inflammasome.</text>
</comment>
<comment type="domain">
    <molecule>Caspase recruitment domain-containing protein 8, C-terminus</molecule>
    <text evidence="24 25">The C-terminal part of CARD8 oligomerizes to form the core of the CARD8 inflammasome filament: in the filament, the CARD domains form a central helical filaments that are promoted by oligomerized, but flexibly linked, UPA regions surrounding the filaments (PubMed:33420028, PubMed:33420033). The UPA region reduces the threshold needed for filament formation and signaling (PubMed:33420028, PubMed:33420033). Directly recruits and polymerizes with the CARD domain of caspase-1 (CASP1) through the favorable side of the growing filament seed (PubMed:33420033).</text>
</comment>
<comment type="PTM">
    <molecule>Caspase recruitment domain-containing protein 8</molecule>
    <text evidence="12 26">Undergoes autocatalytic processing within the FIIND domain to generate the N-terminal and C-terminal parts, which are associated non-covalently in absence of pathogens and other damage-associated signals.</text>
</comment>
<comment type="PTM">
    <molecule>Caspase recruitment domain-containing protein 8, N-terminus</molecule>
    <text evidence="37 41">Ubiquitinated by the N-end rule pathway in response to pathogens and other damage-associated signals, leading to its degradation by the proteasome and subsequent release of the cleaved C-terminal part of the protein (Caspase recruitment domain-containing protein 8, C-terminus), which polymerizes and forms the CARD8 inflammasome.</text>
</comment>
<comment type="PTM">
    <text evidence="26">(Microbial infection) Proteolytic cleavage by HIV-1 protease in the disordered region and within the ZU5 region of the FIIND domain promotes ubiquitination of the N-terminal part by the N-end rule pathway and degradation by the proteasome, releasing the cleaved C-terminal part of the protein (Caspase recruitment domain-containing protein 8, C-terminus), which polymerizes and forms the CARD8 inflammasome.</text>
</comment>
<comment type="PTM">
    <molecule>Isoform 1</molecule>
    <text evidence="22">Undergoes less autocatalytic processing within the FIIND domain compared to isoform 5.</text>
</comment>
<comment type="disease" evidence="10 11 13 15 16">
    <disease id="DI-05954">
        <name>Inflammatory bowel disease 30</name>
        <acronym>IBD30</acronym>
        <description>A chronic, relapsing inflammation of the gastrointestinal tract with a complex etiology and a multifactorial inheritance pattern. It is subdivided into Crohn disease and ulcerative colitis phenotypes. Crohn disease may affect any part of the gastrointestinal tract from the mouth to the anus, but most frequently it involves the terminal ileum and colon. Bowel inflammation is transmural and discontinuous; it may contain granulomas or be associated with intestinal or perianal fistulas. In contrast, in ulcerative colitis, the inflammation is continuous and limited to rectal and colonic mucosal layers; fistulas and granulomas are not observed. Both diseases include extraintestinal inflammation of the skin, eyes, or joints.</description>
        <dbReference type="MIM" id="619079"/>
    </disease>
    <text evidence="10 11 13 15 16">The disease may be caused by variants affecting the gene represented in this entry. A number of groups have studied the possible association between variant rs2043211 and inflammatory bowel disease (PubMed:17030188, PubMed:19319132, PubMed:23506543, PubMed:26462578). According to some studies involving a limited number of patients, this variant is associated with inflammatory bowel disease (PubMed:17030188, PubMed:19319132, PubMed:23506543). Such association is however not confirmed in studies involving a large number of patients (PubMed:26462578). Discrepancies between studies may be caused by the variable consequences of this polymorphism in the different isoforms (PubMed:29408806). Whereas rs2043211 introduces a stop codon after 'Cys-10' (Cys10Ter) in isoform 1, and therefore the likely formation of a downstream transcriptional start site for this isoform, it causes Ile-102 variation in isoform 5, due to the upstream start site (PubMed:29408806). Moreover, most patients bearing this polymorphism continue to express the slightly smaller but fully functional isoform 7, as a result of transcription downstream of the rs2043211 polymorphism (PubMed:29408806).</text>
</comment>
<comment type="sequence caution" evidence="40">
    <conflict type="erroneous initiation">
        <sequence resource="EMBL-CDS" id="BAA76799"/>
    </conflict>
    <text>Extended N-terminus.</text>
</comment>
<comment type="online information" name="Atlas of Genetics and Cytogenetics in Oncology and Haematology">
    <link uri="https://atlasgeneticsoncology.org/gene/913/CARD8"/>
</comment>
<accession>Q9Y2G2</accession>
<accession>B5KVR6</accession>
<accession>B5KVR8</accession>
<accession>B7Z496</accession>
<accession>B7Z4A2</accession>
<accession>E5RFV9</accession>
<accession>E9PEM7</accession>
<accession>G3XAM9</accession>
<accession>Q6PGP8</accession>
<accession>Q96P82</accession>
<sequence>MEKKECPEKSSSSEEELPRRDSGSSRNIDASKLIRLQGSRKLLVDNSIRELQYTKTGIFFQAEACVTNDTVYRELPCVSETLCDISHFFQEDDETEAEPLLFRAVPECQLSGGDIPSVSEEQESSEGQDSGDICSEENQIVSSYASKVCFEIEEDYKNRQFLGPEGNVDVELIDKSTNRYSVWFPTAGWYLWSATGLGFLVRDEVTVTIAFGSWSQHLALDLQHHEQWLVGGPLFDVTAEPEEAVAEIHLPHFISLQAGEVDVSWFLVAHFKNEGMVLEHPARVEPFYAVLESPSFSLMGILLRIASGTRLSIPITSNTLIYYHPHPEDIKFHLYLVPSDALLTKAIDDEEDRFHGVRLQTSPPMEPLNFGSSYIVSNSANLKVMPKELKLSYRSPGEIQHFSKFYAGQMKEPIQLEITEKRHGTLVWDTEVKPVDLQLVAASAPPPFSGAAFVKENHRQLQARMGDLKGVLDDLQDNEVLTENEKELVEQEKTRQSKNEALLSMVEKKGDLALDVLFRSISERDPYLVSYLRQQNL</sequence>
<feature type="chain" id="PRO_0000144080" description="Caspase recruitment domain-containing protein 8">
    <location>
        <begin position="1"/>
        <end position="537"/>
    </location>
</feature>
<feature type="chain" id="PRO_0000452847" description="Caspase recruitment domain-containing protein 8, N-terminus">
    <location>
        <begin position="1"/>
        <end position="296"/>
    </location>
</feature>
<feature type="chain" id="PRO_0000452848" description="Caspase recruitment domain-containing protein 8, C-terminus">
    <location>
        <begin position="297"/>
        <end position="537"/>
    </location>
</feature>
<feature type="domain" description="FIIND" evidence="2">
    <location>
        <begin position="161"/>
        <end position="446"/>
    </location>
</feature>
<feature type="domain" description="CARD" evidence="1">
    <location>
        <begin position="446"/>
        <end position="536"/>
    </location>
</feature>
<feature type="region of interest" description="Disordered" evidence="3">
    <location>
        <begin position="1"/>
        <end position="28"/>
    </location>
</feature>
<feature type="region of interest" description="Disordered" evidence="3">
    <location>
        <begin position="113"/>
        <end position="133"/>
    </location>
</feature>
<feature type="region of interest" description="ZU5" evidence="36">
    <location>
        <begin position="161"/>
        <end position="296"/>
    </location>
</feature>
<feature type="region of interest" description="UPA" evidence="36">
    <location>
        <begin position="297"/>
        <end position="446"/>
    </location>
</feature>
<feature type="compositionally biased region" description="Basic and acidic residues" evidence="3">
    <location>
        <begin position="1"/>
        <end position="23"/>
    </location>
</feature>
<feature type="site" description="(Microbial infection) Cleavage; by HIV-1 protease" evidence="26">
    <location>
        <begin position="59"/>
        <end position="60"/>
    </location>
</feature>
<feature type="site" description="Cleavage; by autolysis" evidence="2 12 19 26">
    <location>
        <begin position="296"/>
        <end position="297"/>
    </location>
</feature>
<feature type="splice variant" id="VSP_061068" description="In isoform 1 and isoform 2.">
    <original>MEKKECPEKSSSSEEELPRRDSGSSRNIDASKLIRLQGSRKLLVDNSIRELQYTKTGIFFQAEACVTNDTVYRELPCVSETLCDISHFFQEDDETEAEPLLFRAVPECQLSGGDIPSVSEEQESSEGQDS</original>
    <variation>MMRQRQSHYCSVLFLSVNYLGGTFP</variation>
    <location>
        <begin position="1"/>
        <end position="130"/>
    </location>
</feature>
<feature type="splice variant" id="VSP_061069" description="In isoform 7.">
    <original>MEKKECPEKSSSSEEELPRRDSGSSRNIDASKLIRLQGSRKLLVDNSIRELQYTKTGIFFQAEACVTNDTVYRELPCVSETLCDISHFFQEDDETEAEPLLFRAVPECQLSGGDIP</original>
    <variation>MGIPTS</variation>
    <location>
        <begin position="1"/>
        <end position="116"/>
    </location>
</feature>
<feature type="splice variant" id="VSP_061070" description="In isoform 4.">
    <location>
        <begin position="21"/>
        <end position="70"/>
    </location>
</feature>
<feature type="splice variant" id="VSP_061071" description="In isoform 6.">
    <location>
        <begin position="71"/>
        <end position="537"/>
    </location>
</feature>
<feature type="splice variant" id="VSP_061072" description="In isoform 1 and isoform 2.">
    <location>
        <position position="258"/>
    </location>
</feature>
<feature type="splice variant" id="VSP_061073" description="In isoform 3 and isoform 2.">
    <original>ELKLS</original>
    <variation>WISSL</variation>
    <location>
        <begin position="388"/>
        <end position="392"/>
    </location>
</feature>
<feature type="splice variant" id="VSP_061074" description="In isoform 3 and isoform 2.">
    <location>
        <begin position="393"/>
        <end position="537"/>
    </location>
</feature>
<feature type="sequence variant" id="VAR_084560" description="In IBD30; uncertain significance." evidence="16">
    <original>V</original>
    <variation>I</variation>
    <location>
        <position position="44"/>
    </location>
</feature>
<feature type="sequence variant" id="VAR_084561" description="In IBD30; dbSNP:rs2043211." evidence="10 11 13 15">
    <original>F</original>
    <variation>I</variation>
    <location>
        <position position="102"/>
    </location>
</feature>
<feature type="sequence variant" id="VAR_048606" description="In dbSNP:rs11881179." evidence="8">
    <original>I</original>
    <variation>V</variation>
    <location>
        <position position="173"/>
    </location>
</feature>
<feature type="sequence variant" id="VAR_061079" description="In dbSNP:rs59878320." evidence="8">
    <original>E</original>
    <variation>A</variation>
    <location>
        <position position="204"/>
    </location>
</feature>
<feature type="mutagenesis site" description="Does not affect cleavage by HIV-1 protease." evidence="26">
    <original>L</original>
    <variation>A</variation>
    <location>
        <position position="51"/>
    </location>
</feature>
<feature type="mutagenesis site" description="Does not affect cleavage by HIV-1 protease." evidence="26">
    <original>Q</original>
    <variation>A</variation>
    <location>
        <position position="52"/>
    </location>
</feature>
<feature type="mutagenesis site" description="Does not affect cleavage by HIV-1 protease." evidence="26">
    <original>Y</original>
    <variation>A</variation>
    <location>
        <position position="53"/>
    </location>
</feature>
<feature type="mutagenesis site" description="Does not affect cleavage by HIV-1 protease." evidence="26">
    <original>T</original>
    <variation>A</variation>
    <location>
        <position position="54"/>
    </location>
</feature>
<feature type="mutagenesis site" description="Does not affect cleavage by HIV-1 protease." evidence="26">
    <original>K</original>
    <variation>A</variation>
    <location>
        <position position="55"/>
    </location>
</feature>
<feature type="mutagenesis site" description="Does not affect cleavage by HIV-1 protease." evidence="26">
    <original>T</original>
    <variation>A</variation>
    <location>
        <position position="56"/>
    </location>
</feature>
<feature type="mutagenesis site" description="Does not affect cleavage by HIV-1 protease." evidence="26">
    <original>G</original>
    <variation>A</variation>
    <location>
        <position position="57"/>
    </location>
</feature>
<feature type="mutagenesis site" description="Does not affect cleavage by HIV-1 protease." evidence="26">
    <original>I</original>
    <variation>A</variation>
    <location>
        <position position="58"/>
    </location>
</feature>
<feature type="mutagenesis site" description="Abolished cleavage by HIV-1 protease, leading to prevent formation of the CARD8 inflammasome and subsequent pyroptosis." evidence="26">
    <original>F</original>
    <variation>A</variation>
    <location>
        <position position="59"/>
    </location>
</feature>
<feature type="mutagenesis site" description="Abolished cleavage by HIV-1 protease, leading to prevent formation of the CARD8 inflammasome and subsequent pyroptosis." evidence="26">
    <original>F</original>
    <variation>A</variation>
    <location>
        <position position="60"/>
    </location>
</feature>
<feature type="mutagenesis site" description="Does not affect sensitivity to Val-boroPro." evidence="22">
    <original>K</original>
    <variation>R</variation>
    <location>
        <position position="157"/>
    </location>
</feature>
<feature type="mutagenesis site" description="No effect on autocatalytic cleavage." evidence="12">
    <original>E</original>
    <variation>A</variation>
    <location>
        <position position="240"/>
    </location>
</feature>
<feature type="mutagenesis site" description="No effect on autocatalytic cleavage." evidence="12">
    <original>E</original>
    <variation>A</variation>
    <location>
        <position position="242"/>
    </location>
</feature>
<feature type="mutagenesis site" description="Severe loss of autocatalytic cleavage." evidence="12">
    <original>H</original>
    <variation>A</variation>
    <location>
        <position position="252"/>
    </location>
</feature>
<feature type="mutagenesis site" description="Severe loss of autocatalytic cleavage." evidence="12">
    <original>H</original>
    <variation>A</variation>
    <location>
        <position position="270"/>
    </location>
</feature>
<feature type="mutagenesis site" description="Abolished interaction with DPP9, without affecting autocatalytic cleavage." evidence="28">
    <original>E</original>
    <variation>R</variation>
    <location>
        <position position="274"/>
    </location>
</feature>
<feature type="mutagenesis site" description="Partial loss of autocatalytic cleavage." evidence="12">
    <original>E</original>
    <variation>A</variation>
    <location>
        <position position="279"/>
    </location>
</feature>
<feature type="mutagenesis site" description="No effect on autocatalytic cleavage." evidence="12">
    <original>H</original>
    <variation>A</variation>
    <location>
        <position position="280"/>
    </location>
</feature>
<feature type="mutagenesis site" description="Partial loss of autocatalytic cleavage." evidence="12">
    <original>S</original>
    <variation>A</variation>
    <location>
        <position position="295"/>
    </location>
</feature>
<feature type="mutagenesis site" description="No effect on autocatalytic cleavage." evidence="12">
    <original>S</original>
    <variation>Q</variation>
    <location>
        <position position="295"/>
    </location>
</feature>
<feature type="mutagenesis site" description="Severe loss of autocatalytic cleavage." evidence="12">
    <original>F</original>
    <variation>H</variation>
    <location>
        <position position="296"/>
    </location>
</feature>
<feature type="mutagenesis site" description="Complete loss of autocatalytic cleavage. Abolished ability to form the CARD8 inflammasome and trigger pyroptosis. Abolished sensitivity to Val-boroPro. Does not affect interaction with DPP9." evidence="12 17 18 19 26 28">
    <original>S</original>
    <variation>A</variation>
    <location>
        <position position="297"/>
    </location>
</feature>
<feature type="mutagenesis site" description="No effect on autocatalytic cleavage." evidence="12">
    <original>H</original>
    <variation>A</variation>
    <location>
        <position position="333"/>
    </location>
</feature>
<feature type="mutagenesis site" description="Does not affect autocatalytic cleavage; does not affect interaction with DPP9; impaired interaction with the C-terminal fragment of CARD8 in the ternary complex." evidence="28">
    <original>L</original>
    <variation>G</variation>
    <location>
        <position position="368"/>
    </location>
</feature>
<feature type="mutagenesis site" description="Does not affect autocatalytic cleavage; does not affect interaction with DPP9; impaired interaction with the C-terminal fragment of CARD8 in the ternary complex." evidence="28">
    <original>F</original>
    <variation>G</variation>
    <location>
        <position position="370"/>
    </location>
</feature>
<feature type="mutagenesis site" description="Does not affect autocatalytic cleavage; does not affect interaction with DPP9; impaired interaction with the C-terminal fragment of CARD8 in the ternary complex." evidence="28">
    <original>R</original>
    <variation>E</variation>
    <location>
        <position position="394"/>
    </location>
</feature>
<feature type="mutagenesis site" description="Does not affect autocatalytic cleavage; does not affect interaction with DPP9; impaired interaction with the C-terminal fragment of CARD8 in the ternary complex." evidence="28">
    <original>F</original>
    <variation>G</variation>
    <location>
        <position position="405"/>
    </location>
</feature>
<feature type="mutagenesis site" description="Abolished formation of inflammasome filaments. Abolished ability to induce pyroptosis." evidence="25">
    <original>R</original>
    <variation>E</variation>
    <location>
        <position position="459"/>
    </location>
</feature>
<feature type="mutagenesis site" description="Abolished formation of inflammasome filaments. Abolished ability to induce pyroptosis." evidence="25">
    <original>R</original>
    <variation>E</variation>
    <location>
        <position position="464"/>
    </location>
</feature>
<feature type="mutagenesis site" description="Inhibits homodimer formation." evidence="7">
    <original>L</original>
    <variation>R</variation>
    <location>
        <position position="472"/>
    </location>
</feature>
<feature type="mutagenesis site" description="Abolished formation of inflammasome filaments. Abolished ability to induce pyroptosis." evidence="25">
    <original>E</original>
    <variation>R</variation>
    <location>
        <position position="485"/>
    </location>
</feature>
<feature type="mutagenesis site" description="Abolished formation of inflammasome filaments." evidence="25">
    <original>E</original>
    <variation>R</variation>
    <location>
        <position position="490"/>
    </location>
</feature>
<feature type="mutagenesis site" description="Abolished formation of inflammasome filaments. Abolished ability to induce pyroptosis." evidence="25">
    <original>R</original>
    <variation>E</variation>
    <location>
        <position position="495"/>
    </location>
</feature>
<feature type="mutagenesis site" description="Abolished formation of inflammasome filaments. Reduced ability to induce pyroptosis." evidence="25">
    <original>D</original>
    <variation>K</variation>
    <location>
        <position position="511"/>
    </location>
</feature>
<feature type="mutagenesis site" description="Abolished formation of inflammasome filaments. Abolished ability to induce pyroptosis." evidence="25">
    <original>Y</original>
    <variation>A</variation>
    <location>
        <position position="527"/>
    </location>
</feature>
<feature type="sequence conflict" description="In Ref. 6; ABW96891." evidence="40" ref="6">
    <original>D</original>
    <variation>G</variation>
    <location>
        <position position="84"/>
    </location>
</feature>
<feature type="sequence conflict" description="In Ref. 6; ABW96891." evidence="40" ref="6">
    <original>E</original>
    <variation>D</variation>
    <location>
        <position position="107"/>
    </location>
</feature>
<feature type="sequence conflict" description="In Ref. 5; AAL02427." evidence="40" ref="5">
    <original>E</original>
    <variation>G</variation>
    <location>
        <position position="165"/>
    </location>
</feature>
<feature type="sequence conflict" description="In Ref. 11; AAH56891." evidence="40" ref="11">
    <original>F</original>
    <variation>S</variation>
    <location>
        <position position="253"/>
    </location>
</feature>
<feature type="sequence conflict" description="In Ref. 8; BAH12488." evidence="40" ref="8">
    <original>P</original>
    <variation>R</variation>
    <location>
        <position position="325"/>
    </location>
</feature>
<feature type="sequence conflict" description="In Ref. 5; AAL02427." evidence="40" ref="5">
    <original>V</original>
    <variation>M</variation>
    <location>
        <position position="432"/>
    </location>
</feature>
<feature type="sequence conflict" description="In Ref. 6; ABW96891/ABW96893." evidence="40" ref="6">
    <original>E</original>
    <variation>G</variation>
    <location>
        <position position="523"/>
    </location>
</feature>
<feature type="sequence conflict" description="In Ref. 5; AAL02427." evidence="40" ref="5">
    <original>L</original>
    <variation>P</variation>
    <location>
        <position position="528"/>
    </location>
</feature>
<feature type="strand" evidence="48">
    <location>
        <begin position="171"/>
        <end position="174"/>
    </location>
</feature>
<feature type="turn" evidence="48">
    <location>
        <begin position="175"/>
        <end position="178"/>
    </location>
</feature>
<feature type="strand" evidence="48">
    <location>
        <begin position="179"/>
        <end position="184"/>
    </location>
</feature>
<feature type="strand" evidence="48">
    <location>
        <begin position="186"/>
        <end position="188"/>
    </location>
</feature>
<feature type="turn" evidence="48">
    <location>
        <begin position="193"/>
        <end position="196"/>
    </location>
</feature>
<feature type="strand" evidence="48">
    <location>
        <begin position="197"/>
        <end position="201"/>
    </location>
</feature>
<feature type="strand" evidence="48">
    <location>
        <begin position="205"/>
        <end position="212"/>
    </location>
</feature>
<feature type="helix" evidence="48">
    <location>
        <begin position="214"/>
        <end position="217"/>
    </location>
</feature>
<feature type="strand" evidence="48">
    <location>
        <begin position="220"/>
        <end position="224"/>
    </location>
</feature>
<feature type="strand" evidence="48">
    <location>
        <begin position="234"/>
        <end position="238"/>
    </location>
</feature>
<feature type="turn" evidence="48">
    <location>
        <begin position="241"/>
        <end position="244"/>
    </location>
</feature>
<feature type="strand" evidence="48">
    <location>
        <begin position="245"/>
        <end position="251"/>
    </location>
</feature>
<feature type="helix" evidence="48">
    <location>
        <begin position="263"/>
        <end position="265"/>
    </location>
</feature>
<feature type="strand" evidence="48">
    <location>
        <begin position="266"/>
        <end position="271"/>
    </location>
</feature>
<feature type="strand" evidence="48">
    <location>
        <begin position="273"/>
        <end position="279"/>
    </location>
</feature>
<feature type="strand" evidence="48">
    <location>
        <begin position="286"/>
        <end position="293"/>
    </location>
</feature>
<feature type="helix" evidence="48">
    <location>
        <begin position="318"/>
        <end position="320"/>
    </location>
</feature>
<feature type="strand" evidence="48">
    <location>
        <begin position="326"/>
        <end position="334"/>
    </location>
</feature>
<feature type="strand" evidence="48">
    <location>
        <begin position="337"/>
        <end position="345"/>
    </location>
</feature>
<feature type="helix" evidence="48">
    <location>
        <begin position="349"/>
        <end position="359"/>
    </location>
</feature>
<feature type="strand" evidence="48">
    <location>
        <begin position="381"/>
        <end position="388"/>
    </location>
</feature>
<feature type="strand" evidence="48">
    <location>
        <begin position="396"/>
        <end position="398"/>
    </location>
</feature>
<feature type="strand" evidence="49">
    <location>
        <begin position="404"/>
        <end position="406"/>
    </location>
</feature>
<feature type="strand" evidence="48">
    <location>
        <begin position="420"/>
        <end position="427"/>
    </location>
</feature>
<feature type="strand" evidence="48">
    <location>
        <begin position="429"/>
        <end position="432"/>
    </location>
</feature>
<feature type="strand" evidence="48">
    <location>
        <begin position="434"/>
        <end position="441"/>
    </location>
</feature>
<feature type="helix" evidence="47">
    <location>
        <begin position="451"/>
        <end position="456"/>
    </location>
</feature>
<feature type="helix" evidence="47">
    <location>
        <begin position="458"/>
        <end position="464"/>
    </location>
</feature>
<feature type="helix" evidence="47">
    <location>
        <begin position="469"/>
        <end position="477"/>
    </location>
</feature>
<feature type="helix" evidence="47">
    <location>
        <begin position="483"/>
        <end position="491"/>
    </location>
</feature>
<feature type="strand" evidence="47">
    <location>
        <begin position="492"/>
        <end position="494"/>
    </location>
</feature>
<feature type="helix" evidence="47">
    <location>
        <begin position="495"/>
        <end position="507"/>
    </location>
</feature>
<feature type="helix" evidence="47">
    <location>
        <begin position="511"/>
        <end position="524"/>
    </location>
</feature>
<feature type="helix" evidence="47">
    <location>
        <begin position="526"/>
        <end position="530"/>
    </location>
</feature>
<feature type="helix" evidence="47">
    <location>
        <begin position="533"/>
        <end position="537"/>
    </location>
</feature>
<feature type="sequence variant" id="VAR_084562" description="In IBD30; dbSNP:rs2043211." evidence="10 11 13 15">
    <location sequence="Q9Y2G2-1">
        <begin position="10"/>
        <end position="431"/>
    </location>
</feature>
<feature type="mutagenesis site" description="Increased autocalalytic cleavage." evidence="22">
    <original>Q</original>
    <variation>QA</variation>
    <location sequence="Q9Y2G2-1">
        <position position="152"/>
    </location>
</feature>
<protein>
    <recommendedName>
        <fullName evidence="40">Caspase recruitment domain-containing protein 8</fullName>
        <ecNumber evidence="12">3.4.-.-</ecNumber>
    </recommendedName>
    <alternativeName>
        <fullName evidence="32">CARD-inhibitor of NF-kappa-B-activating ligand</fullName>
        <shortName evidence="32">CARDINAL</shortName>
    </alternativeName>
    <alternativeName>
        <fullName evidence="35">Tumor up-regulated CARD-containing antagonist of CASP9</fullName>
        <shortName evidence="35">TUCAN</shortName>
    </alternativeName>
    <component>
        <recommendedName>
            <fullName evidence="40">Caspase recruitment domain-containing protein 8, C-terminus</fullName>
            <shortName evidence="38">CARD8-CT</shortName>
        </recommendedName>
    </component>
    <component>
        <recommendedName>
            <fullName evidence="40">Caspase recruitment domain-containing protein 8, N-terminus</fullName>
            <shortName evidence="38">CARD8-NT</shortName>
        </recommendedName>
    </component>
</protein>
<proteinExistence type="evidence at protein level"/>
<evidence type="ECO:0000255" key="1">
    <source>
        <dbReference type="PROSITE-ProRule" id="PRU00046"/>
    </source>
</evidence>
<evidence type="ECO:0000255" key="2">
    <source>
        <dbReference type="PROSITE-ProRule" id="PRU01174"/>
    </source>
</evidence>
<evidence type="ECO:0000256" key="3">
    <source>
        <dbReference type="SAM" id="MobiDB-lite"/>
    </source>
</evidence>
<evidence type="ECO:0000269" key="4">
    <source>
    </source>
</evidence>
<evidence type="ECO:0000269" key="5">
    <source>
    </source>
</evidence>
<evidence type="ECO:0000269" key="6">
    <source>
    </source>
</evidence>
<evidence type="ECO:0000269" key="7">
    <source>
    </source>
</evidence>
<evidence type="ECO:0000269" key="8">
    <source>
    </source>
</evidence>
<evidence type="ECO:0000269" key="9">
    <source>
    </source>
</evidence>
<evidence type="ECO:0000269" key="10">
    <source>
    </source>
</evidence>
<evidence type="ECO:0000269" key="11">
    <source>
    </source>
</evidence>
<evidence type="ECO:0000269" key="12">
    <source>
    </source>
</evidence>
<evidence type="ECO:0000269" key="13">
    <source>
    </source>
</evidence>
<evidence type="ECO:0000269" key="14">
    <source>
    </source>
</evidence>
<evidence type="ECO:0000269" key="15">
    <source>
    </source>
</evidence>
<evidence type="ECO:0000269" key="16">
    <source>
    </source>
</evidence>
<evidence type="ECO:0000269" key="17">
    <source>
    </source>
</evidence>
<evidence type="ECO:0000269" key="18">
    <source>
    </source>
</evidence>
<evidence type="ECO:0000269" key="19">
    <source>
    </source>
</evidence>
<evidence type="ECO:0000269" key="20">
    <source>
    </source>
</evidence>
<evidence type="ECO:0000269" key="21">
    <source>
    </source>
</evidence>
<evidence type="ECO:0000269" key="22">
    <source>
    </source>
</evidence>
<evidence type="ECO:0000269" key="23">
    <source>
    </source>
</evidence>
<evidence type="ECO:0000269" key="24">
    <source>
    </source>
</evidence>
<evidence type="ECO:0000269" key="25">
    <source>
    </source>
</evidence>
<evidence type="ECO:0000269" key="26">
    <source>
    </source>
</evidence>
<evidence type="ECO:0000269" key="27">
    <source>
    </source>
</evidence>
<evidence type="ECO:0000269" key="28">
    <source>
    </source>
</evidence>
<evidence type="ECO:0000269" key="29">
    <source>
    </source>
</evidence>
<evidence type="ECO:0000269" key="30">
    <source>
    </source>
</evidence>
<evidence type="ECO:0000303" key="31">
    <source>
    </source>
</evidence>
<evidence type="ECO:0000303" key="32">
    <source>
    </source>
</evidence>
<evidence type="ECO:0000303" key="33">
    <source>
    </source>
</evidence>
<evidence type="ECO:0000303" key="34">
    <source>
    </source>
</evidence>
<evidence type="ECO:0000303" key="35">
    <source>
    </source>
</evidence>
<evidence type="ECO:0000303" key="36">
    <source>
    </source>
</evidence>
<evidence type="ECO:0000303" key="37">
    <source>
    </source>
</evidence>
<evidence type="ECO:0000303" key="38">
    <source>
    </source>
</evidence>
<evidence type="ECO:0000303" key="39">
    <source ref="4"/>
</evidence>
<evidence type="ECO:0000305" key="40"/>
<evidence type="ECO:0000305" key="41">
    <source>
    </source>
</evidence>
<evidence type="ECO:0000312" key="42">
    <source>
        <dbReference type="HGNC" id="HGNC:17057"/>
    </source>
</evidence>
<evidence type="ECO:0007744" key="43">
    <source>
        <dbReference type="PDB" id="6K9F"/>
    </source>
</evidence>
<evidence type="ECO:0007744" key="44">
    <source>
        <dbReference type="PDB" id="6XKJ"/>
    </source>
</evidence>
<evidence type="ECO:0007744" key="45">
    <source>
        <dbReference type="PDB" id="7JKQ"/>
    </source>
</evidence>
<evidence type="ECO:0007744" key="46">
    <source>
        <dbReference type="PDB" id="7JN7"/>
    </source>
</evidence>
<evidence type="ECO:0007829" key="47">
    <source>
        <dbReference type="PDB" id="4IKM"/>
    </source>
</evidence>
<evidence type="ECO:0007829" key="48">
    <source>
        <dbReference type="PDB" id="7JKQ"/>
    </source>
</evidence>
<evidence type="ECO:0007829" key="49">
    <source>
        <dbReference type="PDB" id="7JN7"/>
    </source>
</evidence>
<reference key="1">
    <citation type="journal article" date="1999" name="DNA Res.">
        <title>Prediction of the coding sequences of unidentified human genes. XIII. The complete sequences of 100 new cDNA clones from brain which code for large proteins in vitro.</title>
        <authorList>
            <person name="Nagase T."/>
            <person name="Ishikawa K."/>
            <person name="Suyama M."/>
            <person name="Kikuno R."/>
            <person name="Hirosawa M."/>
            <person name="Miyajima N."/>
            <person name="Tanaka A."/>
            <person name="Kotani H."/>
            <person name="Nomura N."/>
            <person name="Ohara O."/>
        </authorList>
    </citation>
    <scope>NUCLEOTIDE SEQUENCE [LARGE SCALE MRNA] (ISOFORM 1)</scope>
    <source>
        <tissue>Brain</tissue>
    </source>
</reference>
<reference key="2">
    <citation type="journal article" date="2002" name="J. Biol. Chem.">
        <title>CARD-8 protein, a new CARD family member that regulates caspase-1 activation and apoptosis.</title>
        <authorList>
            <person name="Razmara M."/>
            <person name="Srinivasula S.M."/>
            <person name="Wang L."/>
            <person name="Poyet J.-L."/>
            <person name="Geddes B.J."/>
            <person name="DiStefano P.S."/>
            <person name="Bertin J."/>
            <person name="Alnemri E.S."/>
        </authorList>
    </citation>
    <scope>NUCLEOTIDE SEQUENCE [MRNA] (ISOFORM 1)</scope>
    <scope>FUNCTION</scope>
    <scope>TISSUE SPECIFICITY</scope>
    <scope>INTERACTION WITH CARD16 AND CARD18</scope>
</reference>
<reference key="3">
    <citation type="journal article" date="2002" name="Int. J. Oncol.">
        <title>NDPP1 is a novel CARD domain containing protein which can inhibit apoptosis and suppress NF-kappaB activation.</title>
        <authorList>
            <person name="Zhang H."/>
            <person name="Fu W."/>
        </authorList>
    </citation>
    <scope>NUCLEOTIDE SEQUENCE [MRNA] (ISOFORM 1)</scope>
</reference>
<reference key="4">
    <citation type="submission" date="2001-01" db="EMBL/GenBank/DDBJ databases">
        <title>DACAR, a novel CARD-containing protein.</title>
        <authorList>
            <person name="Guiet C."/>
            <person name="Vito P."/>
        </authorList>
    </citation>
    <scope>NUCLEOTIDE SEQUENCE [MRNA] (ISOFORM 1)</scope>
</reference>
<reference key="5">
    <citation type="journal article" date="2001" name="J. Biol. Chem.">
        <title>CARDINAL, a novel caspase recruitment domain protein, is an inhibitor of multiple NF-kappa B activation pathways.</title>
        <authorList>
            <person name="Bouchier-Hayes L."/>
            <person name="Conroy H."/>
            <person name="Egan H."/>
            <person name="Adrain C."/>
            <person name="Creagh E.M."/>
            <person name="MacFarlane M."/>
            <person name="Martin S.J."/>
        </authorList>
    </citation>
    <scope>NUCLEOTIDE SEQUENCE [MRNA] (ISOFORM 1)</scope>
    <scope>FUNCTION</scope>
    <scope>INTERACTION WITH IKBKG</scope>
    <scope>TISSUE SPECIFICITY</scope>
</reference>
<reference key="6">
    <citation type="journal article" date="2008" name="Eur. J. Hum. Genet.">
        <title>Novel isoforms of the CARD8 (TUCAN) gene evade a nonsense mutation.</title>
        <authorList>
            <person name="Bagnall R.D."/>
            <person name="Roberts R.G."/>
            <person name="Mirza M.M."/>
            <person name="Torigoe T."/>
            <person name="Prescott N.J."/>
            <person name="Mathew C.G."/>
        </authorList>
    </citation>
    <scope>NUCLEOTIDE SEQUENCE [MRNA] (ISOFORMS 5 AND 7)</scope>
    <scope>ALTERNATIVE SPLICING</scope>
</reference>
<reference key="7">
    <citation type="submission" date="2002-05" db="EMBL/GenBank/DDBJ databases">
        <authorList>
            <person name="Guo J.H."/>
            <person name="Yu L."/>
        </authorList>
    </citation>
    <scope>NUCLEOTIDE SEQUENCE [LARGE SCALE MRNA] (ISOFORM 2)</scope>
    <source>
        <tissue>Kidney</tissue>
    </source>
</reference>
<reference key="8">
    <citation type="journal article" date="2004" name="Nat. Genet.">
        <title>Complete sequencing and characterization of 21,243 full-length human cDNAs.</title>
        <authorList>
            <person name="Ota T."/>
            <person name="Suzuki Y."/>
            <person name="Nishikawa T."/>
            <person name="Otsuki T."/>
            <person name="Sugiyama T."/>
            <person name="Irie R."/>
            <person name="Wakamatsu A."/>
            <person name="Hayashi K."/>
            <person name="Sato H."/>
            <person name="Nagai K."/>
            <person name="Kimura K."/>
            <person name="Makita H."/>
            <person name="Sekine M."/>
            <person name="Obayashi M."/>
            <person name="Nishi T."/>
            <person name="Shibahara T."/>
            <person name="Tanaka T."/>
            <person name="Ishii S."/>
            <person name="Yamamoto J."/>
            <person name="Saito K."/>
            <person name="Kawai Y."/>
            <person name="Isono Y."/>
            <person name="Nakamura Y."/>
            <person name="Nagahari K."/>
            <person name="Murakami K."/>
            <person name="Yasuda T."/>
            <person name="Iwayanagi T."/>
            <person name="Wagatsuma M."/>
            <person name="Shiratori A."/>
            <person name="Sudo H."/>
            <person name="Hosoiri T."/>
            <person name="Kaku Y."/>
            <person name="Kodaira H."/>
            <person name="Kondo H."/>
            <person name="Sugawara M."/>
            <person name="Takahashi M."/>
            <person name="Kanda K."/>
            <person name="Yokoi T."/>
            <person name="Furuya T."/>
            <person name="Kikkawa E."/>
            <person name="Omura Y."/>
            <person name="Abe K."/>
            <person name="Kamihara K."/>
            <person name="Katsuta N."/>
            <person name="Sato K."/>
            <person name="Tanikawa M."/>
            <person name="Yamazaki M."/>
            <person name="Ninomiya K."/>
            <person name="Ishibashi T."/>
            <person name="Yamashita H."/>
            <person name="Murakawa K."/>
            <person name="Fujimori K."/>
            <person name="Tanai H."/>
            <person name="Kimata M."/>
            <person name="Watanabe M."/>
            <person name="Hiraoka S."/>
            <person name="Chiba Y."/>
            <person name="Ishida S."/>
            <person name="Ono Y."/>
            <person name="Takiguchi S."/>
            <person name="Watanabe S."/>
            <person name="Yosida M."/>
            <person name="Hotuta T."/>
            <person name="Kusano J."/>
            <person name="Kanehori K."/>
            <person name="Takahashi-Fujii A."/>
            <person name="Hara H."/>
            <person name="Tanase T.-O."/>
            <person name="Nomura Y."/>
            <person name="Togiya S."/>
            <person name="Komai F."/>
            <person name="Hara R."/>
            <person name="Takeuchi K."/>
            <person name="Arita M."/>
            <person name="Imose N."/>
            <person name="Musashino K."/>
            <person name="Yuuki H."/>
            <person name="Oshima A."/>
            <person name="Sasaki N."/>
            <person name="Aotsuka S."/>
            <person name="Yoshikawa Y."/>
            <person name="Matsunawa H."/>
            <person name="Ichihara T."/>
            <person name="Shiohata N."/>
            <person name="Sano S."/>
            <person name="Moriya S."/>
            <person name="Momiyama H."/>
            <person name="Satoh N."/>
            <person name="Takami S."/>
            <person name="Terashima Y."/>
            <person name="Suzuki O."/>
            <person name="Nakagawa S."/>
            <person name="Senoh A."/>
            <person name="Mizoguchi H."/>
            <person name="Goto Y."/>
            <person name="Shimizu F."/>
            <person name="Wakebe H."/>
            <person name="Hishigaki H."/>
            <person name="Watanabe T."/>
            <person name="Sugiyama A."/>
            <person name="Takemoto M."/>
            <person name="Kawakami B."/>
            <person name="Yamazaki M."/>
            <person name="Watanabe K."/>
            <person name="Kumagai A."/>
            <person name="Itakura S."/>
            <person name="Fukuzumi Y."/>
            <person name="Fujimori Y."/>
            <person name="Komiyama M."/>
            <person name="Tashiro H."/>
            <person name="Tanigami A."/>
            <person name="Fujiwara T."/>
            <person name="Ono T."/>
            <person name="Yamada K."/>
            <person name="Fujii Y."/>
            <person name="Ozaki K."/>
            <person name="Hirao M."/>
            <person name="Ohmori Y."/>
            <person name="Kawabata A."/>
            <person name="Hikiji T."/>
            <person name="Kobatake N."/>
            <person name="Inagaki H."/>
            <person name="Ikema Y."/>
            <person name="Okamoto S."/>
            <person name="Okitani R."/>
            <person name="Kawakami T."/>
            <person name="Noguchi S."/>
            <person name="Itoh T."/>
            <person name="Shigeta K."/>
            <person name="Senba T."/>
            <person name="Matsumura K."/>
            <person name="Nakajima Y."/>
            <person name="Mizuno T."/>
            <person name="Morinaga M."/>
            <person name="Sasaki M."/>
            <person name="Togashi T."/>
            <person name="Oyama M."/>
            <person name="Hata H."/>
            <person name="Watanabe M."/>
            <person name="Komatsu T."/>
            <person name="Mizushima-Sugano J."/>
            <person name="Satoh T."/>
            <person name="Shirai Y."/>
            <person name="Takahashi Y."/>
            <person name="Nakagawa K."/>
            <person name="Okumura K."/>
            <person name="Nagase T."/>
            <person name="Nomura N."/>
            <person name="Kikuchi H."/>
            <person name="Masuho Y."/>
            <person name="Yamashita R."/>
            <person name="Nakai K."/>
            <person name="Yada T."/>
            <person name="Nakamura Y."/>
            <person name="Ohara O."/>
            <person name="Isogai T."/>
            <person name="Sugano S."/>
        </authorList>
    </citation>
    <scope>NUCLEOTIDE SEQUENCE [LARGE SCALE MRNA] (ISOFORMS 3 AND 4)</scope>
    <scope>VARIANTS VAL-173 AND ALA-204</scope>
    <source>
        <tissue>Umbilical cord blood</tissue>
    </source>
</reference>
<reference key="9">
    <citation type="journal article" date="2004" name="Nature">
        <title>The DNA sequence and biology of human chromosome 19.</title>
        <authorList>
            <person name="Grimwood J."/>
            <person name="Gordon L.A."/>
            <person name="Olsen A.S."/>
            <person name="Terry A."/>
            <person name="Schmutz J."/>
            <person name="Lamerdin J.E."/>
            <person name="Hellsten U."/>
            <person name="Goodstein D."/>
            <person name="Couronne O."/>
            <person name="Tran-Gyamfi M."/>
            <person name="Aerts A."/>
            <person name="Altherr M."/>
            <person name="Ashworth L."/>
            <person name="Bajorek E."/>
            <person name="Black S."/>
            <person name="Branscomb E."/>
            <person name="Caenepeel S."/>
            <person name="Carrano A.V."/>
            <person name="Caoile C."/>
            <person name="Chan Y.M."/>
            <person name="Christensen M."/>
            <person name="Cleland C.A."/>
            <person name="Copeland A."/>
            <person name="Dalin E."/>
            <person name="Dehal P."/>
            <person name="Denys M."/>
            <person name="Detter J.C."/>
            <person name="Escobar J."/>
            <person name="Flowers D."/>
            <person name="Fotopulos D."/>
            <person name="Garcia C."/>
            <person name="Georgescu A.M."/>
            <person name="Glavina T."/>
            <person name="Gomez M."/>
            <person name="Gonzales E."/>
            <person name="Groza M."/>
            <person name="Hammon N."/>
            <person name="Hawkins T."/>
            <person name="Haydu L."/>
            <person name="Ho I."/>
            <person name="Huang W."/>
            <person name="Israni S."/>
            <person name="Jett J."/>
            <person name="Kadner K."/>
            <person name="Kimball H."/>
            <person name="Kobayashi A."/>
            <person name="Larionov V."/>
            <person name="Leem S.-H."/>
            <person name="Lopez F."/>
            <person name="Lou Y."/>
            <person name="Lowry S."/>
            <person name="Malfatti S."/>
            <person name="Martinez D."/>
            <person name="McCready P.M."/>
            <person name="Medina C."/>
            <person name="Morgan J."/>
            <person name="Nelson K."/>
            <person name="Nolan M."/>
            <person name="Ovcharenko I."/>
            <person name="Pitluck S."/>
            <person name="Pollard M."/>
            <person name="Popkie A.P."/>
            <person name="Predki P."/>
            <person name="Quan G."/>
            <person name="Ramirez L."/>
            <person name="Rash S."/>
            <person name="Retterer J."/>
            <person name="Rodriguez A."/>
            <person name="Rogers S."/>
            <person name="Salamov A."/>
            <person name="Salazar A."/>
            <person name="She X."/>
            <person name="Smith D."/>
            <person name="Slezak T."/>
            <person name="Solovyev V."/>
            <person name="Thayer N."/>
            <person name="Tice H."/>
            <person name="Tsai M."/>
            <person name="Ustaszewska A."/>
            <person name="Vo N."/>
            <person name="Wagner M."/>
            <person name="Wheeler J."/>
            <person name="Wu K."/>
            <person name="Xie G."/>
            <person name="Yang J."/>
            <person name="Dubchak I."/>
            <person name="Furey T.S."/>
            <person name="DeJong P."/>
            <person name="Dickson M."/>
            <person name="Gordon D."/>
            <person name="Eichler E.E."/>
            <person name="Pennacchio L.A."/>
            <person name="Richardson P."/>
            <person name="Stubbs L."/>
            <person name="Rokhsar D.S."/>
            <person name="Myers R.M."/>
            <person name="Rubin E.M."/>
            <person name="Lucas S.M."/>
        </authorList>
    </citation>
    <scope>NUCLEOTIDE SEQUENCE [LARGE SCALE GENOMIC DNA]</scope>
</reference>
<reference key="10">
    <citation type="submission" date="2005-07" db="EMBL/GenBank/DDBJ databases">
        <authorList>
            <person name="Mural R.J."/>
            <person name="Istrail S."/>
            <person name="Sutton G.G."/>
            <person name="Florea L."/>
            <person name="Halpern A.L."/>
            <person name="Mobarry C.M."/>
            <person name="Lippert R."/>
            <person name="Walenz B."/>
            <person name="Shatkay H."/>
            <person name="Dew I."/>
            <person name="Miller J.R."/>
            <person name="Flanigan M.J."/>
            <person name="Edwards N.J."/>
            <person name="Bolanos R."/>
            <person name="Fasulo D."/>
            <person name="Halldorsson B.V."/>
            <person name="Hannenhalli S."/>
            <person name="Turner R."/>
            <person name="Yooseph S."/>
            <person name="Lu F."/>
            <person name="Nusskern D.R."/>
            <person name="Shue B.C."/>
            <person name="Zheng X.H."/>
            <person name="Zhong F."/>
            <person name="Delcher A.L."/>
            <person name="Huson D.H."/>
            <person name="Kravitz S.A."/>
            <person name="Mouchard L."/>
            <person name="Reinert K."/>
            <person name="Remington K.A."/>
            <person name="Clark A.G."/>
            <person name="Waterman M.S."/>
            <person name="Eichler E.E."/>
            <person name="Adams M.D."/>
            <person name="Hunkapiller M.W."/>
            <person name="Myers E.W."/>
            <person name="Venter J.C."/>
        </authorList>
    </citation>
    <scope>NUCLEOTIDE SEQUENCE [LARGE SCALE GENOMIC DNA]</scope>
</reference>
<reference key="11">
    <citation type="journal article" date="2004" name="Genome Res.">
        <title>The status, quality, and expansion of the NIH full-length cDNA project: the Mammalian Gene Collection (MGC).</title>
        <authorList>
            <consortium name="The MGC Project Team"/>
        </authorList>
    </citation>
    <scope>NUCLEOTIDE SEQUENCE [LARGE SCALE MRNA] (ISOFORM 3)</scope>
    <source>
        <tissue>Eye</tissue>
    </source>
</reference>
<reference key="12">
    <citation type="journal article" date="2011" name="PLoS ONE">
        <title>CARD8 and NLRP1 undergo autoproteolytic processing through a ZU5-like domain.</title>
        <authorList>
            <person name="D'Osualdo A."/>
            <person name="Weichenberger C.X."/>
            <person name="Wagner R.N."/>
            <person name="Godzik A."/>
            <person name="Wooley J."/>
            <person name="Reed J.C."/>
        </authorList>
    </citation>
    <scope>PROTEIN SEQUENCE OF 284-304</scope>
    <scope>FUNCTION</scope>
    <scope>AUTOCATALYTIC CLEAVAGE</scope>
    <scope>MUTAGENESIS OF GLU-240; GLU-242; HIS-252; HIS-270; GLU-279; HIS-280; SER-295; PHE-296; SER-297 AND HIS-333</scope>
</reference>
<reference key="13">
    <citation type="journal article" date="2001" name="J. Biol. Chem.">
        <title>TUCAN, an antiapoptotic caspase-associated recruitment domain family protein overexpressed in cancer.</title>
        <authorList>
            <person name="Pathan N."/>
            <person name="Marusawa H."/>
            <person name="Krajewska M."/>
            <person name="Matsuzawa S."/>
            <person name="Kim H."/>
            <person name="Okada K."/>
            <person name="Torii S."/>
            <person name="Kitada S."/>
            <person name="Krajewski S."/>
            <person name="Welsh K."/>
            <person name="Pio F."/>
            <person name="Godzik A."/>
            <person name="Reed J.C."/>
        </authorList>
    </citation>
    <scope>FUNCTION</scope>
</reference>
<reference key="14">
    <citation type="journal article" date="2002" name="FEBS Lett.">
        <title>TUCAN/CARDINAL and DRAL participate in a common pathway for modulation of NF-kappaB activation.</title>
        <authorList>
            <person name="Stilo R."/>
            <person name="Leonardi A."/>
            <person name="Formisano L."/>
            <person name="Di Jeso B."/>
            <person name="Vito P."/>
            <person name="Liguoro D."/>
        </authorList>
    </citation>
    <scope>FUNCTION</scope>
    <scope>INTERACTION WITH DRAL</scope>
    <scope>MUTAGENESIS OF LEU-472</scope>
</reference>
<reference key="15">
    <citation type="journal article" date="2004" name="Immunity">
        <title>NALP3 forms an IL-1beta-processing inflammasome with increased activity in Muckle-Wells autoinflammatory disorder.</title>
        <authorList>
            <person name="Agostini L."/>
            <person name="Martinon F."/>
            <person name="Burns K."/>
            <person name="McDermott M.F."/>
            <person name="Hawkins P.N."/>
            <person name="Tschopp J."/>
        </authorList>
    </citation>
    <scope>FUNCTION</scope>
    <scope>INTERACTION WITH NLRP2</scope>
    <scope>SUBCELLULAR LOCATION</scope>
</reference>
<reference key="16">
    <citation type="journal article" date="2014" name="Arthritis Res. Ther.">
        <title>CARD8 is a negative regulator for NLRP3 inflammasome, but mutant NLRP3 in cryopyrin-associated periodic syndromes escapes the restriction.</title>
        <authorList>
            <person name="Ito S."/>
            <person name="Hara Y."/>
            <person name="Kubota T."/>
        </authorList>
    </citation>
    <scope>FUNCTION</scope>
    <scope>SUBCELLULAR LOCATION</scope>
    <scope>INTERACTION WITH NLRP3</scope>
</reference>
<reference key="17">
    <citation type="journal article" date="2018" name="Nat. Med.">
        <title>DPP8/DPP9 inhibitor-induced pyroptosis for treatment of acute myeloid leukemia.</title>
        <authorList>
            <person name="Johnson D.C."/>
            <person name="Taabazuing C.Y."/>
            <person name="Okondo M.C."/>
            <person name="Chui A.J."/>
            <person name="Rao S.D."/>
            <person name="Brown F.C."/>
            <person name="Reed C."/>
            <person name="Peguero E."/>
            <person name="de Stanchina E."/>
            <person name="Kentsis A."/>
            <person name="Bachovchin D.A."/>
        </authorList>
    </citation>
    <scope>ACTIVITY REGULATION</scope>
    <scope>MUTAGENESIS OF SER-297</scope>
</reference>
<reference key="18">
    <citation type="journal article" date="2019" name="ACS Chem. Biol.">
        <title>DPP9's enzymatic activity and not its binding to CARD8 inhibits inflammasome activation.</title>
        <authorList>
            <person name="Griswold A.R."/>
            <person name="Ball D.P."/>
            <person name="Bhattacharjee A."/>
            <person name="Chui A.J."/>
            <person name="Rao S.D."/>
            <person name="Taabazuing C.Y."/>
            <person name="Bachovchin D.A."/>
        </authorList>
    </citation>
    <scope>INTERACTION WITH DPP8 AND DPP9</scope>
    <scope>ACTIVITY REGULATION</scope>
    <scope>MUTAGENESIS OF SER-297</scope>
</reference>
<reference key="19">
    <citation type="journal article" date="2020" name="Cell Death Dis.">
        <title>DPP8/9 inhibitors activate the CARD8 inflammasome in resting lymphocytes.</title>
        <authorList>
            <person name="Johnson D.C."/>
            <person name="Okondo M.C."/>
            <person name="Orth E.L."/>
            <person name="Rao S.D."/>
            <person name="Huang H.C."/>
            <person name="Ball D.P."/>
            <person name="Bachovchin D.A."/>
        </authorList>
    </citation>
    <scope>ACTIVITY REGULATION</scope>
</reference>
<reference key="20">
    <citation type="journal article" date="2020" name="Cell Rep.">
        <title>Activation of the CARD8 inflammasome requires a disordered region.</title>
        <authorList>
            <person name="Chui A.J."/>
            <person name="Griswold A.R."/>
            <person name="Taabazuing C.Y."/>
            <person name="Orth E.L."/>
            <person name="Gai K."/>
            <person name="Rao S.D."/>
            <person name="Ball D.P."/>
            <person name="Hsiao J.C."/>
            <person name="Bachovchin D.A."/>
        </authorList>
    </citation>
    <scope>FUNCTION</scope>
    <scope>ACTIVITY REGULATION</scope>
    <scope>DOMAIN</scope>
    <scope>UBIQUITINATION</scope>
    <scope>MUTAGENESIS OF GLN-152 (ISOFORM 1)</scope>
    <scope>MUTAGENESIS OF LYS-157</scope>
</reference>
<reference key="21">
    <citation type="journal article" date="2020" name="EMBO J.">
        <title>CARD8 inflammasome activation triggers pyroptosis in human T cells.</title>
        <authorList>
            <person name="Linder A."/>
            <person name="Bauernfried S."/>
            <person name="Cheng Y."/>
            <person name="Albanese M."/>
            <person name="Jung C."/>
            <person name="Keppler O.T."/>
            <person name="Hornung V."/>
        </authorList>
    </citation>
    <scope>FUNCTION</scope>
    <scope>ACTIVITY REGULATION</scope>
    <scope>SUBCELLULAR LOCATION</scope>
</reference>
<reference key="22">
    <citation type="journal article" date="2020" name="Immunol. Rev.">
        <title>The NLRP1 and CARD8 inflammasomes.</title>
        <authorList>
            <person name="Taabazuing C.Y."/>
            <person name="Griswold A.R."/>
            <person name="Bachovchin D.A."/>
        </authorList>
    </citation>
    <scope>REVIEW</scope>
</reference>
<reference key="23">
    <citation type="journal article" date="2020" name="Life. Sci Alliance">
        <title>Caspase-1 interdomain linker cleavage is required for pyroptosis.</title>
        <authorList>
            <person name="Ball D.P."/>
            <person name="Taabazuing C.Y."/>
            <person name="Griswold A.R."/>
            <person name="Orth E.L."/>
            <person name="Rao S.D."/>
            <person name="Kotliar I.B."/>
            <person name="Vostal L.E."/>
            <person name="Johnson D.C."/>
            <person name="Bachovchin D.A."/>
        </authorList>
    </citation>
    <scope>FUNCTION</scope>
    <scope>SUBUNIT</scope>
    <scope>PROTEOLYTIC CLEAVAGE</scope>
    <scope>MUTAGENESIS OF SER-297</scope>
</reference>
<reference key="24">
    <citation type="journal article" date="2020" name="Sci. Rep.">
        <title>Expression of CARD8 in human atherosclerosis and its regulation of inflammatory proteins in human endothelial cells.</title>
        <authorList>
            <person name="Paramel G.V."/>
            <person name="Karadimou G."/>
            <person name="Eremo A.G."/>
            <person name="Ljungberg L.U."/>
            <person name="Hedin U."/>
            <person name="Olofsson P.S."/>
            <person name="Folkersen L."/>
            <person name="Berne G.P."/>
            <person name="Sirsjoe A."/>
            <person name="Fransen K."/>
        </authorList>
    </citation>
    <scope>SUBCELLULAR LOCATION</scope>
</reference>
<reference key="25">
    <citation type="journal article" date="2021" name="Nature">
        <title>Structural and biochemical mechanisms of NLRP1 inhibition by DPP9.</title>
        <authorList>
            <person name="Huang M."/>
            <person name="Zhang X."/>
            <person name="Toh G.A."/>
            <person name="Gong Q."/>
            <person name="Wang J."/>
            <person name="Han Z."/>
            <person name="Wu B."/>
            <person name="Zhong F."/>
            <person name="Chai J."/>
        </authorList>
    </citation>
    <scope>INTERACTION WITH DPP9</scope>
</reference>
<reference key="26">
    <citation type="journal article" date="2021" name="Science">
        <title>CARD8 is an inflammasome sensor for HIV-1 protease activity.</title>
        <authorList>
            <person name="Wang Q."/>
            <person name="Gao H."/>
            <person name="Clark K.M."/>
            <person name="Mugisha C.S."/>
            <person name="Davis K."/>
            <person name="Tang J.P."/>
            <person name="Harlan G.H."/>
            <person name="DeSelm C.J."/>
            <person name="Presti R.M."/>
            <person name="Kutluay S.B."/>
            <person name="Shan L."/>
        </authorList>
    </citation>
    <scope>FUNCTION</scope>
    <scope>SUBUNIT</scope>
    <scope>ACTIVITY REGULATION</scope>
    <scope>PROTEOLYTIC CLEAVAGE (MICROBIAL INFECTION)</scope>
    <scope>SUBCELLULAR LOCATION</scope>
    <scope>MUTAGENESIS OF LEU-51; GLN-52; TYR-53; THR-54; LYS-55; THR-56; GLY-57; ILE-58; PHE-59; PHE-60 AND SER-297</scope>
</reference>
<reference key="27">
    <citation type="journal article" date="2022" name="Nat. Chem. Biol.">
        <title>M24B aminopeptidase inhibitors selectively activate the CARD8 inflammasome.</title>
        <authorList>
            <person name="Rao S.D."/>
            <person name="Chen Q."/>
            <person name="Wang Q."/>
            <person name="Orth-He E.L."/>
            <person name="Saoi M."/>
            <person name="Griswold A.R."/>
            <person name="Bhattacharjee A."/>
            <person name="Ball D.P."/>
            <person name="Huang H.C."/>
            <person name="Chui A.J."/>
            <person name="Covelli D.J."/>
            <person name="You S."/>
            <person name="Cross J.R."/>
            <person name="Bachovchin D.A."/>
        </authorList>
    </citation>
    <scope>ACTIVITY REGULATION</scope>
</reference>
<reference key="28">
    <citation type="journal article" date="2022" name="Nat. Chem. Biol.">
        <title>Chemical inhibition of DPP9 sensitizes the CARD8 inflammasome in HIV-1-infected cells.</title>
        <authorList>
            <person name="Clark K.M."/>
            <person name="Kim J.G."/>
            <person name="Wang Q."/>
            <person name="Gao H."/>
            <person name="Presti R.M."/>
            <person name="Shan L."/>
        </authorList>
    </citation>
    <scope>FUNCTION</scope>
    <scope>ACTIVITY REGULATION</scope>
</reference>
<reference key="29">
    <citation type="journal article" date="2013" name="Acta Crystallogr. F">
        <title>The structure of the CARD8 caspase-recruitment domain suggests its association with the FIIND domain and procaspases through adjacent surfaces.</title>
        <authorList>
            <person name="Jin T."/>
            <person name="Huang M."/>
            <person name="Smith P."/>
            <person name="Jiang J."/>
            <person name="Xiao T.S."/>
        </authorList>
    </citation>
    <scope>X-RAY CRYSTALLOGRAPHY (2.46 ANGSTROMS) OF 451-537</scope>
</reference>
<reference evidence="45 46" key="30">
    <citation type="journal article" date="2021" name="Immunity">
        <title>Dipeptidyl peptidase 9 sets a threshold for CARD8 inflammasome formation by sequestering its active C-terminal fragment.</title>
        <authorList>
            <person name="Sharif H."/>
            <person name="Hollingsworth L.R."/>
            <person name="Griswold A.R."/>
            <person name="Hsiao J.C."/>
            <person name="Wang Q."/>
            <person name="Bachovchin D.A."/>
            <person name="Wu H."/>
        </authorList>
    </citation>
    <scope>STRUCTURE BY ELECTRON MICROSCOPY (3.30 ANGSTROMS) IN COMPLEX WITH DPP9</scope>
    <scope>FUNCTION</scope>
    <scope>ACTIVITY REGULATION</scope>
    <scope>INTERACTION WITH DPP9</scope>
    <scope>MUTAGENESIS OF GLU-274; SER-297; LEU-368; PHE-370; ARG-394 AND PHE-405</scope>
</reference>
<reference evidence="43" key="31">
    <citation type="journal article" date="2021" name="Nat. Commun.">
        <title>Structural basis for distinct inflammasome complex assembly by human NLRP1 and CARD8.</title>
        <authorList>
            <person name="Gong Q."/>
            <person name="Robinson K."/>
            <person name="Xu C."/>
            <person name="Huynh P.T."/>
            <person name="Chong K.H.C."/>
            <person name="Tan E.Y.J."/>
            <person name="Zhang J."/>
            <person name="Boo Z.Z."/>
            <person name="Teo D.E.T."/>
            <person name="Lay K."/>
            <person name="Zhang Y."/>
            <person name="Lim J.S.Y."/>
            <person name="Goh W.I."/>
            <person name="Wright G."/>
            <person name="Zhong F.L."/>
            <person name="Reversade B."/>
            <person name="Wu B."/>
        </authorList>
    </citation>
    <scope>STRUCTURE BY ELECTRON MICROSCOPY (3.70 ANGSTROMS) OF 451-537</scope>
    <scope>SUBCELLULAR LOCATION</scope>
    <scope>SUBUNIT</scope>
    <scope>DOMAIN</scope>
</reference>
<reference evidence="44" key="32">
    <citation type="journal article" date="2021" name="Nat. Commun.">
        <title>Mechanism of filament formation in UPA-promoted CARD8 and NLRP1 inflammasomes.</title>
        <authorList>
            <person name="Robert Hollingsworth L."/>
            <person name="David L."/>
            <person name="Li Y."/>
            <person name="Griswold A.R."/>
            <person name="Ruan J."/>
            <person name="Sharif H."/>
            <person name="Fontana P."/>
            <person name="Orth-He E.L."/>
            <person name="Fu T.M."/>
            <person name="Bachovchin D.A."/>
            <person name="Wu H."/>
        </authorList>
    </citation>
    <scope>STRUCTURE BY ELECTRON MICROSCOPY (3.54 ANGSTROMS) OF 451-537</scope>
    <scope>SUBCELLULAR LOCATION</scope>
    <scope>SUBUNIT</scope>
    <scope>DOMAIN</scope>
    <scope>MUTAGENESIS OF ARG-459; ARG-464; GLU-485; GLU-490; ARG-495; ASP-511 AND TYR-527</scope>
</reference>
<reference key="33">
    <citation type="journal article" date="2006" name="Gastroenterology">
        <title>TUCAN (CARD8) genetic variants and inflammatory bowel disease.</title>
        <authorList>
            <person name="McGovern D.P."/>
            <person name="Butler H."/>
            <person name="Ahmad T."/>
            <person name="Paolucci M."/>
            <person name="van Heel D.A."/>
            <person name="Negoro K."/>
            <person name="Hysi P."/>
            <person name="Ragoussis J."/>
            <person name="Travis S.P."/>
            <person name="Cardon L.R."/>
            <person name="Jewell D.P."/>
        </authorList>
    </citation>
    <scope>VARIANT IBD30 10-CYS--LEU-431 DEL (ISOFORM 1)</scope>
    <scope>VARIANT IBD30 ILE-102</scope>
</reference>
<reference key="34">
    <citation type="journal article" date="2009" name="Am. J. Gastroenterol.">
        <title>Combined polymorphisms in genes encoding the inflammasome components NALP3 and CARD8 confer susceptibility to Crohn's disease in Swedish men.</title>
        <authorList>
            <person name="Schoultz I."/>
            <person name="Verma D."/>
            <person name="Halfvarsson J."/>
            <person name="Toerkvist L."/>
            <person name="Fredrikson M."/>
            <person name="Sjoeqvist U."/>
            <person name="Loerdal M."/>
            <person name="Tysk C."/>
            <person name="Lerm M."/>
            <person name="Soederkvist P."/>
            <person name="Soederholm J.D."/>
        </authorList>
    </citation>
    <scope>VARIANT IBD30 10-CYS--LEU-431 DEL (ISOFORM 1)</scope>
    <scope>VARIANT IBD30 ILE-102</scope>
</reference>
<reference key="35">
    <citation type="journal article" date="2013" name="BMC Med. Genet.">
        <title>The CARD8 p.C10X mutation associates with a low anti-glycans antibody response in patients with Crohn's disease.</title>
        <authorList>
            <person name="Vasseur F."/>
            <person name="Sendid B."/>
            <person name="Broly F."/>
            <person name="Gower-Rousseau C."/>
            <person name="Sarazin A."/>
            <person name="Standaert-Vitse A."/>
            <person name="Colombel J.F."/>
            <person name="Poulain D."/>
            <person name="Jouault T."/>
        </authorList>
    </citation>
    <scope>VARIANT IBD30 10-CYS--LEU-431 DEL (ISOFORM 1)</scope>
    <scope>VARIANT IBD30 ILE-102</scope>
</reference>
<reference key="36">
    <citation type="journal article" date="2015" name="Autoimmunity">
        <title>Is the CARD8 rs2043211 polymorphism associated with susceptibility to Crohn's disease? A meta-analysis.</title>
        <authorList>
            <person name="Zhang Z.T."/>
            <person name="Ma X.J."/>
            <person name="Zong Y."/>
            <person name="Du X.M."/>
            <person name="Hu J.H."/>
            <person name="Lu G.C."/>
        </authorList>
    </citation>
    <scope>VARIANT IBD30 10-CYS--LEU-431 DEL (ISOFORM 1)</scope>
    <scope>VARIANT IBD30 ILE-102</scope>
</reference>
<reference key="37">
    <citation type="journal article" date="2018" name="J. Clin. Invest.">
        <title>Loss-of-function CARD8 mutation causes NLRP3 inflammasome activation and Crohn's disease.</title>
        <authorList>
            <person name="Mao L."/>
            <person name="Kitani A."/>
            <person name="Similuk M."/>
            <person name="Oler A.J."/>
            <person name="Albenberg L."/>
            <person name="Kelsen J."/>
            <person name="Aktay A."/>
            <person name="Quezado M."/>
            <person name="Yao M."/>
            <person name="Montgomery-Recht K."/>
            <person name="Fuss I.J."/>
            <person name="Strober W."/>
        </authorList>
    </citation>
    <scope>VARIANT IBD30 ILE-44</scope>
</reference>
<name>CARD8_HUMAN</name>